<keyword id="KW-0877">Alternative promoter usage</keyword>
<keyword id="KW-0025">Alternative splicing</keyword>
<keyword id="KW-1003">Cell membrane</keyword>
<keyword id="KW-1015">Disulfide bond</keyword>
<keyword id="KW-0325">Glycoprotein</keyword>
<keyword id="KW-0406">Ion transport</keyword>
<keyword id="KW-0472">Membrane</keyword>
<keyword id="KW-0597">Phosphoprotein</keyword>
<keyword id="KW-1267">Proteomics identification</keyword>
<keyword id="KW-1185">Reference proteome</keyword>
<keyword id="KW-0812">Transmembrane</keyword>
<keyword id="KW-1133">Transmembrane helix</keyword>
<keyword id="KW-0813">Transport</keyword>
<comment type="function">
    <text evidence="6 7 8 9 10 11 13 15 16 17 18 19 20 21 22 23 25 26 28 29 55">Mediates the Na(+)-independent transport of steroid sulfate conjugates and other specific organic anions (PubMed:10873595, PubMed:11159893, PubMed:11932330, PubMed:12724351, PubMed:14610227, PubMed:16908597, PubMed:18501590, PubMed:20507927, PubMed:22201122, PubMed:23531488, PubMed:25132355, PubMed:26383540, PubMed:27576593, PubMed:28408210, PubMed:29871943, PubMed:34628357). Responsible for the transport of estrone 3-sulfate (E1S) through the basal membrane of syncytiotrophoblast, highlighting a potential role in the placental absorption of fetal-derived sulfated steroids including the steroid hormone precursor dehydroepiandrosterone sulfate (DHEA-S) (PubMed:11932330, PubMed:12409283). Also facilitates the uptake of sulfated steroids at the basal/sinusoidal membrane of hepatocytes, therefore accounting for the major part of organic anions clearance of liver (PubMed:11159893). Mediates the intestinal uptake of sulfated steroids (PubMed:12724351, PubMed:28408210). Mediates the uptake of the neurosteroids DHEA-S and pregnenolone sulfate (PregS) into the endothelial cells of the blood-brain barrier as the first step to enter the brain (PubMed:16908597, PubMed:25132355). Also plays a role in the reuptake of neuropeptides such as substance P/TAC1 and vasoactive intestinal peptide/VIP released from retinal neurons (PubMed:25132355). May act as a heme transporter that promotes cellular iron availability via heme oxygenase/HMOX2 and independently of TFRC (PubMed:35714613). Also transports heme by-product coproporphyrin III (CPIII), and may be involved in their hepatic disposition (PubMed:26383540). Mediates the uptake of other substrates such as prostaglandins D2 (PGD2), E1 (PGE1) and E2 (PGE2), taurocholate, L-thyroxine, leukotriene C4 and thromboxane B2 (PubMed:10873595, PubMed:14610227, PubMed:19129463, PubMed:29871943, Ref.25). May contribute to regulate the transport of organic compounds in testis across the blood-testis-barrier (Probable). Shows a pH-sensitive substrate specificity which may be ascribed to the protonation state of the binding site and leads to a stimulation of substrate transport in an acidic microenvironment (PubMed:14610227, PubMed:19129463, PubMed:22201122). The exact transport mechanism has not been yet deciphered but most likely involves an anion exchange, coupling the cellular uptake of organic substrate with the efflux of an anionic compound (PubMed:19129463, PubMed:20507927, PubMed:26277985). Hydrogencarbonate/HCO3(-) acts as a probable counteranion that exchanges for organic anions (PubMed:19129463). Cytoplasmic glutamate may also act as counteranion in the placenta (PubMed:26277985). An inwardly directed proton gradient has also been proposed as the driving force of E1S uptake with a (H(+):E1S) stoichiometry of (1:1) (PubMed:20507927).</text>
</comment>
<comment type="function">
    <molecule>Isoform 3</molecule>
    <text evidence="19">Has estrone 3-sulfate (E1S) transport activity comparable with the full-length isoform 1.</text>
</comment>
<comment type="catalytic activity">
    <reaction evidence="39 42 43 44 48 50 54">
        <text>dehydroepiandrosterone 3-sulfate(out) = dehydroepiandrosterone 3-sulfate(in)</text>
        <dbReference type="Rhea" id="RHEA:71839"/>
        <dbReference type="ChEBI" id="CHEBI:57905"/>
    </reaction>
</comment>
<comment type="catalytic activity">
    <reaction evidence="24 38 39 40 41 42 43 44 45 46 47 48 50 51 52 53 54 56">
        <text>estrone 3-sulfate(out) = estrone 3-sulfate(in)</text>
        <dbReference type="Rhea" id="RHEA:71835"/>
        <dbReference type="ChEBI" id="CHEBI:60050"/>
    </reaction>
</comment>
<comment type="catalytic activity">
    <reaction evidence="16">
        <text>estrone 3-sulfate(out) + hydrogencarbonate(in) = estrone 3-sulfate(in) + hydrogencarbonate(out)</text>
        <dbReference type="Rhea" id="RHEA:73055"/>
        <dbReference type="ChEBI" id="CHEBI:17544"/>
        <dbReference type="ChEBI" id="CHEBI:60050"/>
    </reaction>
</comment>
<comment type="catalytic activity">
    <reaction evidence="42 53">
        <text>taurocholate(out) = taurocholate(in)</text>
        <dbReference type="Rhea" id="RHEA:71703"/>
        <dbReference type="ChEBI" id="CHEBI:36257"/>
    </reaction>
</comment>
<comment type="catalytic activity">
    <reaction evidence="51">
        <text>coproporphyrin III(out) = coproporphyrin III(in)</text>
        <dbReference type="Rhea" id="RHEA:74363"/>
        <dbReference type="ChEBI" id="CHEBI:131725"/>
    </reaction>
</comment>
<comment type="catalytic activity">
    <reaction evidence="49">
        <text>substance P(out) = substance P(in)</text>
        <dbReference type="Rhea" id="RHEA:74367"/>
        <dbReference type="ChEBI" id="CHEBI:190692"/>
    </reaction>
</comment>
<comment type="catalytic activity">
    <reaction evidence="43 54">
        <text>pregnenolone sulfate(out) = pregnenolone sulfate(in)</text>
        <dbReference type="Rhea" id="RHEA:73023"/>
        <dbReference type="ChEBI" id="CHEBI:133000"/>
    </reaction>
</comment>
<comment type="catalytic activity">
    <reaction evidence="38 56">
        <text>prostaglandin E2(out) = prostaglandin E2(in)</text>
        <dbReference type="Rhea" id="RHEA:50984"/>
        <dbReference type="ChEBI" id="CHEBI:606564"/>
    </reaction>
</comment>
<comment type="catalytic activity">
    <reaction evidence="2">
        <text>prostaglandin D2(out) = prostaglandin D2(in)</text>
        <dbReference type="Rhea" id="RHEA:50976"/>
        <dbReference type="ChEBI" id="CHEBI:57406"/>
    </reaction>
</comment>
<comment type="catalytic activity">
    <reaction evidence="45">
        <text>L-thyroxine(out) = L-thyroxine(in)</text>
        <dbReference type="Rhea" id="RHEA:71819"/>
        <dbReference type="ChEBI" id="CHEBI:58448"/>
    </reaction>
</comment>
<comment type="activity regulation">
    <text evidence="13 29">E1S, DHEA-S and PregS transports are regulated by steroid hormones. In the case of testosterone, transport of E1S and DHEA-S was inhibited, whereas progesterone stimulated E1S, DHEA-S and PregS uptake (PubMed:16908597). Progesterone stimulates high-affinity uptake of E1S whereas it inhibits low-affinity uptake of E1S (Ref.25). Progesterone doesn't affect the uptake of PGE2 (Ref.25).</text>
</comment>
<comment type="biophysicochemical properties">
    <kinetics>
        <KM evidence="11">13.1 uM for estrone 3-sulfate (at pH 5.0)</KM>
        <KM evidence="16">9.36 uM for estrone-3-sulfate (at pH 6.5)</KM>
        <KM evidence="8">35 uM for estrone 3-sulfate (at pH 7.2)</KM>
        <KM evidence="13">14 uM for estrone 3-sulfate (at pH 7.3)</KM>
        <KM evidence="25">6.4 uM for estrone 3-sulfate (at pH 7.4)</KM>
        <KM evidence="15">19.1 uM for estrone 3-sulfate (at pH 7.4)</KM>
        <KM evidence="11">8.09 uM for estrone 3-sulfate (at pH 7.4)</KM>
        <KM evidence="23">7.1 uM for estrone 3-sulfate (at pH 7.4)</KM>
        <KM evidence="23">6.76 uM for estrone 3-sulfate (at pH 7.4)</KM>
        <KM evidence="17">16 uM for estrone 3-sulfate (at pH 7.4)</KM>
        <KM evidence="7">6.3 uM for estrone 3-sulfate (at pH 7.5)</KM>
        <KM evidence="16">17.7 uM for estrone-3-sulfate (at pH 8.0)</KM>
        <KM evidence="18">29.9 uM for estrone 3-sulfate for the low-affinity site (at pH 6.5)</KM>
        <KM evidence="29">51.4 uM for estrone 3-sulfate for the low-affinity site (at pH 6.5)</KM>
        <KM evidence="18">0.1 uM for estrone 3-sulfate for the high-affinity site (at pH 6.5)</KM>
        <KM evidence="29">0.463 uM for estrone 3-sulfate for the high-affinity site (at pH 6.5)</KM>
        <KM evidence="15">201.8 uM for dehydroepiandrosterone sulfate (at pH 7.4)</KM>
        <KM evidence="16">0.31 uM for L-thyroxine (at pH 6.5)</KM>
        <KM evidence="16">0.77 uM for L-thyroxine (at pH 8.0)</KM>
        <KM evidence="11">71.8 uM for taurocholate (at pH 5.0)</KM>
        <KM evidence="20">84 uM for substance P/TAC1 (at pH 7.5)</KM>
        <KM evidence="20">94 uM for vasoactive intestinal peptide/VIP (at pH 7.5)</KM>
        <KM evidence="22">0.31 uM for coproporphyrin III (at pH 7.4)</KM>
        <Vmax evidence="11">2135.0 pmol/min/mg enzyme with estrone 3-sulfate as substrate (at pH 5.0)</Vmax>
        <Vmax evidence="16">1293.0 pmol/min/mg enzyme with estrone-3-sulfate as substrate (at pH 6.5)</Vmax>
        <Vmax evidence="8">12300.0 pmol/min/mg enzyme with estrone 3-sulfate as substrate (at pH 7.2)</Vmax>
        <Vmax evidence="13">169.0 pmol/min/mg enzyme with estrone 3-sulfate as substrate (at pH 7.3)</Vmax>
        <Vmax evidence="15">585.0 pmol/min/mg enzyme with estrone 3-sulfate as substrate (at pH 7.4)</Vmax>
        <Vmax evidence="25">351.0 pmol/min/mg enzyme with estrone 3-sulfate as substrate (at pH 7.4)</Vmax>
        <Vmax evidence="11">300.0 pmol/min/mg enzyme with estrone 3-sulfate as substrate (at pH 7.4)</Vmax>
        <Vmax evidence="23">182.0 pmol/min/mg enzyme with estrone 3-sulfate as substrate (at pH 7.4)</Vmax>
        <Vmax evidence="17">209.0 pmol/min/mg enzyme with estrone 3-sulfate as substrate (at pH 7.4)</Vmax>
        <Vmax evidence="16">1400.0 pmol/min/mg enzyme with estrone-3-sulfate as substrate (at pH 8.0)</Vmax>
        <Vmax evidence="15">602.0 pmol/min/mg enzyme with dehydroepiandrosterone sulfate as substrate (at pH 7.4)</Vmax>
        <Vmax evidence="16">5.76 pmol/min/mg enzyme with L-thyroxine as substrate (at pH 6.5)</Vmax>
        <Vmax evidence="16">7.28 pmol/min/mg enzyme with L-thyroxine as substrate (at pH 8.0)</Vmax>
        <Vmax evidence="11">546.0 pmol/min/mg enzyme with taurocholate as substrate (at pH 5.0)</Vmax>
        <Vmax evidence="22">19.0 pmol/min/mg enzyme with coproporphyrin III as substrate (at pH 7.4)</Vmax>
        <text evidence="18 29">Estrone 3-sulfate transport exhibits a biphasic saturation kinetics, with Km and Vmax values of high- and low-affinity sites due to the presence of multiple binding sites.</text>
    </kinetics>
    <phDependence>
        <text evidence="10 11 17 18">Optimum pH is around 5.0 with estrone 3-sulfate, dehydroepiandrosterone sulfate and taurocholate as substrates (PubMed:12724351, PubMed:14610227, PubMed:20507927, PubMed:22201122). The high-affinity site for estrone 3-sulfate binding is pH-dependent with increased transport at lower pH, while the low-affinity site is pH-independent (PubMed:22201122). Taurocholate is only transported at acidic pH (PubMed:14610227).</text>
    </phDependence>
    <temperatureDependence>
        <text evidence="8">Optimum temperature is 37 degrees Celsius with estrone 3-sulfate as substrate.</text>
    </temperatureDependence>
</comment>
<comment type="subcellular location">
    <subcellularLocation>
        <location evidence="20">Cell membrane</location>
        <topology evidence="37">Multi-pass membrane protein</topology>
    </subcellularLocation>
    <subcellularLocation>
        <location evidence="7 8 9 27">Basal cell membrane</location>
        <topology evidence="37">Multi-pass membrane protein</topology>
    </subcellularLocation>
    <subcellularLocation>
        <location evidence="24">Basolateral cell membrane</location>
        <topology evidence="37">Multi-pass membrane protein</topology>
    </subcellularLocation>
    <subcellularLocation>
        <location evidence="10 24">Apical cell membrane</location>
        <topology evidence="37">Multi-pass membrane protein</topology>
    </subcellularLocation>
    <text evidence="7 8 9 10 24 27">Expressed at the basal membrane of hepatocytes, syncytiotrophoblast and Sertoli cells (PubMed:11159893, PubMed:11932330, PubMed:12409283, PubMed:35307651). Localized to the basolateral membrane of enterocytes (PubMed:28408210). Also found at the apical membrane of enterocytes (PubMed:12724351, PubMed:28408210).</text>
</comment>
<comment type="alternative products">
    <event type="alternative promoter"/>
    <event type="alternative splicing"/>
    <isoform>
        <id>O94956-1</id>
        <name>1</name>
        <name>1b</name>
        <name>FL</name>
        <sequence type="displayed"/>
    </isoform>
    <isoform>
        <id>O94956-2</id>
        <name>2</name>
        <sequence type="described" ref="VSP_006147 VSP_006148"/>
    </isoform>
    <isoform>
        <id>O94956-3</id>
        <name>3</name>
        <name>1e</name>
        <name>Short</name>
        <sequence type="described" ref="VSP_054109"/>
    </isoform>
    <isoform>
        <id>O94956-4</id>
        <name>4</name>
        <sequence type="described" ref="VSP_054110"/>
    </isoform>
</comment>
<comment type="tissue specificity">
    <text evidence="6 7 8 9 10 19 20 21 24 27">Strongly expressed in the liver, at the sinusoidal membrane of the hepatocytes (PubMed:10873595, PubMed:11159893, PubMed:23531488). Expressed in the kidney (PubMed:11159893). Expressed in placental trophoblasts and syncytiotrophoblast (PubMed:11159893, PubMed:11932330, PubMed:12409283, PubMed:26277985). Expressed in the small intestine (PubMed:10873595, PubMed:11159893, PubMed:12724351, PubMed:23531488, PubMed:28408210). Expressed in the blood-brain barrier, in endothelial cells of brain capillaries (PubMed:11159893, PubMed:25132355). Expressed in the retina, in the inner nuclear layer and the inner plexiform layer (PubMed:25132355). Expressed in skelettal muscles (PubMed:23531488). In testis, primarily localized to the basal membrane of Sertoli cells and weakly expressed within the tubules (PubMed:10873595, PubMed:11159893, PubMed:35307651). Also expressed in pancreas, lung, heart, colon, ovary and spleen (PubMed:10873595, PubMed:11159893). Expressed in fetal brain, heart, kidney, liver, lung, skeletal muscle, spleen and pancreas (PubMed:10873595).</text>
</comment>
<comment type="tissue specificity">
    <molecule>Isoform 1</molecule>
    <text evidence="19">Highest expression in brain. Predominant isoform compared to isoform 3 in small intestine duodenum, kidney, placenta, and skeletal muscle.</text>
</comment>
<comment type="tissue specificity">
    <molecule>Isoform 3</molecule>
    <text evidence="19">Predominant isoform compared to isoform 1 in liver. Also expressed in small intestine duodenum, kidney, brain, placenta, and skeletal muscle.</text>
</comment>
<comment type="induction">
    <molecule>Isoform 3</molecule>
    <text evidence="48">Its expression is regulated by HNF4A.</text>
</comment>
<comment type="domain">
    <text evidence="16 25">A conserved histidine residue in the third transmembrane domain (His-136) might play an essential role in the pH sensitivity of SLCO2B1/OATP2B1-mediated substrate transport (PubMed:19129463). Transmembrane domain 1 (TM1) may be localized within the substrate binding pocket (PubMed:29871943).</text>
</comment>
<comment type="miscellaneous">
    <text evidence="6 7 10 11 19 21 23 29">Most likely contributes to the oral absorption and the disposition of a wide range of drugs in the intestine and the liver (PubMed:10873595, PubMed:11159893, PubMed:12724351, PubMed:14610227, PubMed:23531488, PubMed:26277985, PubMed:27576593, Ref.25).</text>
</comment>
<comment type="similarity">
    <text evidence="37">Belongs to the organo anion transporter (TC 2.A.60) family.</text>
</comment>
<comment type="caution">
    <text evidence="7 8 10 11 18 19 24 25 29">While some reports have shown that E1S transport exhibited single-saturation kinetics (PubMed:11932330, PubMed:14610227), other studies demonstrated a biphasic saturation kinetics (PubMed:11932330, PubMed:14610227, PubMed:22201122, Ref.25). Despite a previous report that demonstrated a pH-dependent substrate uptake and a transport stimulation at low pH (PubMed:14610227), another study did not observe any pH-dependent E1S and taurocholate transport (PubMed:14610227, PubMed:23531488). Was shown to mediate bile acid taurocholate transport at low pH in some studies (PubMed:14610227, PubMed:29871943), but not others (PubMed:11159893, PubMed:23531488, PubMed:29871943). The enterocyte localization of SLCO2B1/OATP2B1 remains uncertain. While some authors found it in the apical membrane (PubMed:12724351), consistent with a function as uptake carrier contributing to the intestinal absorption of drugs, other studies demonstrated a basolateral membrane expression, supporting a physiological role in substrate uptake from the blood flow and intestinal clearance (PubMed:12724351, PubMed:28408210).</text>
</comment>
<comment type="sequence caution" evidence="37">
    <conflict type="erroneous initiation">
        <sequence resource="EMBL-CDS" id="BAA74903"/>
    </conflict>
    <text>Extended N-terminus.</text>
</comment>
<protein>
    <recommendedName>
        <fullName>Solute carrier organic anion transporter family member 2B1</fullName>
    </recommendedName>
    <alternativeName>
        <fullName evidence="33">Organic anion transporter B</fullName>
        <shortName evidence="30 33">OATP-B</shortName>
    </alternativeName>
    <alternativeName>
        <fullName>Organic anion transporter polypeptide-related protein 2</fullName>
        <shortName>OATP-RP2</shortName>
        <shortName>OATPRP2</shortName>
    </alternativeName>
    <alternativeName>
        <fullName evidence="34">Organic anion transporting polypeptide 2B1</fullName>
        <shortName evidence="34">OATP2B1</shortName>
    </alternativeName>
    <alternativeName>
        <fullName evidence="31">Solute carrier family 21 member 9</fullName>
    </alternativeName>
</protein>
<dbReference type="EMBL" id="AB026256">
    <property type="protein sequence ID" value="BAA78638.1"/>
    <property type="molecule type" value="mRNA"/>
</dbReference>
<dbReference type="EMBL" id="AF205073">
    <property type="protein sequence ID" value="AAG42205.1"/>
    <property type="molecule type" value="mRNA"/>
</dbReference>
<dbReference type="EMBL" id="AB020687">
    <property type="protein sequence ID" value="BAA74903.2"/>
    <property type="status" value="ALT_INIT"/>
    <property type="molecule type" value="mRNA"/>
</dbReference>
<dbReference type="EMBL" id="AK290234">
    <property type="protein sequence ID" value="BAF82923.1"/>
    <property type="molecule type" value="mRNA"/>
</dbReference>
<dbReference type="EMBL" id="AK294503">
    <property type="protein sequence ID" value="BAG57720.1"/>
    <property type="molecule type" value="mRNA"/>
</dbReference>
<dbReference type="EMBL" id="AK300134">
    <property type="protein sequence ID" value="BAG61922.1"/>
    <property type="molecule type" value="mRNA"/>
</dbReference>
<dbReference type="EMBL" id="AL117465">
    <property type="protein sequence ID" value="CAB55940.1"/>
    <property type="molecule type" value="mRNA"/>
</dbReference>
<dbReference type="EMBL" id="AP001972">
    <property type="status" value="NOT_ANNOTATED_CDS"/>
    <property type="molecule type" value="Genomic_DNA"/>
</dbReference>
<dbReference type="EMBL" id="KF455415">
    <property type="status" value="NOT_ANNOTATED_CDS"/>
    <property type="molecule type" value="Genomic_DNA"/>
</dbReference>
<dbReference type="EMBL" id="CH471076">
    <property type="protein sequence ID" value="EAW74957.1"/>
    <property type="molecule type" value="Genomic_DNA"/>
</dbReference>
<dbReference type="EMBL" id="CH471076">
    <property type="protein sequence ID" value="EAW74956.1"/>
    <property type="molecule type" value="Genomic_DNA"/>
</dbReference>
<dbReference type="EMBL" id="BC041095">
    <property type="protein sequence ID" value="AAH41095.1"/>
    <property type="molecule type" value="mRNA"/>
</dbReference>
<dbReference type="CCDS" id="CCDS44683.1">
    <molecule id="O94956-3"/>
</dbReference>
<dbReference type="CCDS" id="CCDS53679.1">
    <molecule id="O94956-4"/>
</dbReference>
<dbReference type="CCDS" id="CCDS8235.1">
    <molecule id="O94956-1"/>
</dbReference>
<dbReference type="PIR" id="T17250">
    <property type="entry name" value="T17250"/>
</dbReference>
<dbReference type="RefSeq" id="NP_001138683.1">
    <molecule id="O94956-3"/>
    <property type="nucleotide sequence ID" value="NM_001145211.3"/>
</dbReference>
<dbReference type="RefSeq" id="NP_001138684.1">
    <molecule id="O94956-4"/>
    <property type="nucleotide sequence ID" value="NM_001145212.3"/>
</dbReference>
<dbReference type="RefSeq" id="NP_009187.1">
    <molecule id="O94956-1"/>
    <property type="nucleotide sequence ID" value="NM_007256.5"/>
</dbReference>
<dbReference type="RefSeq" id="XP_047282289.1">
    <molecule id="O94956-3"/>
    <property type="nucleotide sequence ID" value="XM_047426333.1"/>
</dbReference>
<dbReference type="RefSeq" id="XP_047282290.1">
    <molecule id="O94956-3"/>
    <property type="nucleotide sequence ID" value="XM_047426334.1"/>
</dbReference>
<dbReference type="RefSeq" id="XP_054223556.1">
    <molecule id="O94956-3"/>
    <property type="nucleotide sequence ID" value="XM_054367581.1"/>
</dbReference>
<dbReference type="RefSeq" id="XP_054223557.1">
    <molecule id="O94956-3"/>
    <property type="nucleotide sequence ID" value="XM_054367582.1"/>
</dbReference>
<dbReference type="RefSeq" id="XP_054223558.1">
    <molecule id="O94956-3"/>
    <property type="nucleotide sequence ID" value="XM_054367583.1"/>
</dbReference>
<dbReference type="SMR" id="O94956"/>
<dbReference type="BioGRID" id="116442">
    <property type="interactions" value="4"/>
</dbReference>
<dbReference type="FunCoup" id="O94956">
    <property type="interactions" value="461"/>
</dbReference>
<dbReference type="STRING" id="9606.ENSP00000289575"/>
<dbReference type="BindingDB" id="O94956"/>
<dbReference type="ChEMBL" id="CHEMBL1743124"/>
<dbReference type="DrugBank" id="DB03166">
    <property type="generic name" value="Acetic acid"/>
</dbReference>
<dbReference type="DrugBank" id="DB00770">
    <property type="generic name" value="Alprostadil"/>
</dbReference>
<dbReference type="DrugBank" id="DB11586">
    <property type="generic name" value="Asunaprevir"/>
</dbReference>
<dbReference type="DrugBank" id="DB01072">
    <property type="generic name" value="Atazanavir"/>
</dbReference>
<dbReference type="DrugBank" id="DB01076">
    <property type="generic name" value="Atorvastatin"/>
</dbReference>
<dbReference type="DrugBank" id="DB12319">
    <property type="generic name" value="Benzbromarone"/>
</dbReference>
<dbReference type="DrugBank" id="DB03793">
    <property type="generic name" value="Benzoic acid"/>
</dbReference>
<dbReference type="DrugBank" id="DB01053">
    <property type="generic name" value="Benzylpenicillin"/>
</dbReference>
<dbReference type="DrugBank" id="DB11591">
    <property type="generic name" value="Bilastine"/>
</dbReference>
<dbReference type="DrugBank" id="DB08862">
    <property type="generic name" value="Cholecystokinin"/>
</dbReference>
<dbReference type="DrugBank" id="DB04272">
    <property type="generic name" value="Citric acid"/>
</dbReference>
<dbReference type="DrugBank" id="DB00286">
    <property type="generic name" value="Conjugated estrogens"/>
</dbReference>
<dbReference type="DrugBank" id="DB09213">
    <property type="generic name" value="Dexibuprofen"/>
</dbReference>
<dbReference type="DrugBank" id="DB00255">
    <property type="generic name" value="Diethylstilbestrol"/>
</dbReference>
<dbReference type="DrugBank" id="DB00917">
    <property type="generic name" value="Dinoprostone"/>
</dbReference>
<dbReference type="DrugBank" id="DB08995">
    <property type="generic name" value="Diosmin"/>
</dbReference>
<dbReference type="DrugBank" id="DB00975">
    <property type="generic name" value="Dipyridamole"/>
</dbReference>
<dbReference type="DrugBank" id="DB05928">
    <property type="generic name" value="Dovitinib"/>
</dbReference>
<dbReference type="DrugBank" id="DB06374">
    <property type="generic name" value="Elacestrant"/>
</dbReference>
<dbReference type="DrugBank" id="DB00530">
    <property type="generic name" value="Erlotinib"/>
</dbReference>
<dbReference type="DrugBank" id="DB13952">
    <property type="generic name" value="Estradiol acetate"/>
</dbReference>
<dbReference type="DrugBank" id="DB13953">
    <property type="generic name" value="Estradiol benzoate"/>
</dbReference>
<dbReference type="DrugBank" id="DB13954">
    <property type="generic name" value="Estradiol cypionate"/>
</dbReference>
<dbReference type="DrugBank" id="DB13955">
    <property type="generic name" value="Estradiol dienanthate"/>
</dbReference>
<dbReference type="DrugBank" id="DB13956">
    <property type="generic name" value="Estradiol valerate"/>
</dbReference>
<dbReference type="DrugBank" id="DB00655">
    <property type="generic name" value="Estrone"/>
</dbReference>
<dbReference type="DrugBank" id="DB00950">
    <property type="generic name" value="Fexofenadine"/>
</dbReference>
<dbReference type="DrugBank" id="DB01095">
    <property type="generic name" value="Fluvastatin"/>
</dbReference>
<dbReference type="DrugBank" id="DB01241">
    <property type="generic name" value="Gemfibrozil"/>
</dbReference>
<dbReference type="DrugBank" id="DB01645">
    <property type="generic name" value="Genistein"/>
</dbReference>
<dbReference type="DrugBank" id="DB01016">
    <property type="generic name" value="Glyburide"/>
</dbReference>
<dbReference type="DrugBank" id="DB01050">
    <property type="generic name" value="Ibuprofen"/>
</dbReference>
<dbReference type="DrugBank" id="DB01088">
    <property type="generic name" value="Iloprost"/>
</dbReference>
<dbReference type="DrugBank" id="DB00224">
    <property type="generic name" value="Indinavir"/>
</dbReference>
<dbReference type="DrugBank" id="DB01167">
    <property type="generic name" value="Itraconazole"/>
</dbReference>
<dbReference type="DrugBank" id="DB04398">
    <property type="generic name" value="Lactic acid"/>
</dbReference>
<dbReference type="DrugBank" id="DB11660">
    <property type="generic name" value="Latanoprostene bunod"/>
</dbReference>
<dbReference type="DrugBank" id="DB00451">
    <property type="generic name" value="Levothyroxine"/>
</dbReference>
<dbReference type="DrugBank" id="DB11611">
    <property type="generic name" value="Lifitegrast"/>
</dbReference>
<dbReference type="DrugBank" id="DB00227">
    <property type="generic name" value="Lovastatin"/>
</dbReference>
<dbReference type="DrugBank" id="DB16226">
    <property type="generic name" value="Maralixibat"/>
</dbReference>
<dbReference type="DrugBank" id="DB00244">
    <property type="generic name" value="Mesalazine"/>
</dbReference>
<dbReference type="DrugBank" id="DB00471">
    <property type="generic name" value="Montelukast"/>
</dbReference>
<dbReference type="DrugBank" id="DB03467">
    <property type="generic name" value="Naringenin"/>
</dbReference>
<dbReference type="DrugBank" id="DB01149">
    <property type="generic name" value="Nefazodone"/>
</dbReference>
<dbReference type="DrugBank" id="DB00220">
    <property type="generic name" value="Nelfinavir"/>
</dbReference>
<dbReference type="DrugBank" id="DB00627">
    <property type="generic name" value="Niacin"/>
</dbReference>
<dbReference type="DrugBank" id="DB01051">
    <property type="generic name" value="Novobiocin"/>
</dbReference>
<dbReference type="DrugBank" id="DB11632">
    <property type="generic name" value="Opicapone"/>
</dbReference>
<dbReference type="DrugBank" id="DB03902">
    <property type="generic name" value="Oxalic Acid"/>
</dbReference>
<dbReference type="DrugBank" id="DB12978">
    <property type="generic name" value="Pexidartinib"/>
</dbReference>
<dbReference type="DrugBank" id="DB02746">
    <property type="generic name" value="Phthalic Acid"/>
</dbReference>
<dbReference type="DrugBank" id="DB00554">
    <property type="generic name" value="Piroxicam"/>
</dbReference>
<dbReference type="DrugBank" id="DB08860">
    <property type="generic name" value="Pitavastatin"/>
</dbReference>
<dbReference type="DrugBank" id="DB01708">
    <property type="generic name" value="Prasterone"/>
</dbReference>
<dbReference type="DrugBank" id="DB05804">
    <property type="generic name" value="Prasterone sulfate"/>
</dbReference>
<dbReference type="DrugBank" id="DB00175">
    <property type="generic name" value="Pravastatin"/>
</dbReference>
<dbReference type="DrugBank" id="DB04216">
    <property type="generic name" value="Quercetin"/>
</dbReference>
<dbReference type="DrugBank" id="DB00206">
    <property type="generic name" value="Reserpine"/>
</dbReference>
<dbReference type="DrugBank" id="DB01045">
    <property type="generic name" value="Rifampin"/>
</dbReference>
<dbReference type="DrugBank" id="DB11753">
    <property type="generic name" value="Rifamycin"/>
</dbReference>
<dbReference type="DrugBank" id="DB00503">
    <property type="generic name" value="Ritonavir"/>
</dbReference>
<dbReference type="DrugBank" id="DB01098">
    <property type="generic name" value="Rosuvastatin"/>
</dbReference>
<dbReference type="DrugBank" id="DB00936">
    <property type="generic name" value="Salicylic acid"/>
</dbReference>
<dbReference type="DrugBank" id="DB01232">
    <property type="generic name" value="Saquinavir"/>
</dbReference>
<dbReference type="DrugBank" id="DB09298">
    <property type="generic name" value="Silibinin"/>
</dbReference>
<dbReference type="DrugBank" id="DB06290">
    <property type="generic name" value="Simeprevir"/>
</dbReference>
<dbReference type="DrugBank" id="DB00641">
    <property type="generic name" value="Simvastatin"/>
</dbReference>
<dbReference type="DrugBank" id="DB00795">
    <property type="generic name" value="Sulfasalazine"/>
</dbReference>
<dbReference type="DrugBank" id="DB04348">
    <property type="generic name" value="Taurocholic acid"/>
</dbReference>
<dbReference type="DrugBank" id="DB05521">
    <property type="generic name" value="Telaprevir"/>
</dbReference>
<dbReference type="DrugBank" id="DB11761">
    <property type="generic name" value="Tenapanor"/>
</dbReference>
<dbReference type="DrugBank" id="DB00759">
    <property type="generic name" value="Tetracycline"/>
</dbReference>
<dbReference type="DrugBank" id="DB00932">
    <property type="generic name" value="Tipranavir"/>
</dbReference>
<dbReference type="DrugBank" id="DB01124">
    <property type="generic name" value="Tolbutamide"/>
</dbReference>
<dbReference type="DrugBank" id="DB00313">
    <property type="generic name" value="Valproic acid"/>
</dbReference>
<dbReference type="DrugBank" id="DB11613">
    <property type="generic name" value="Velpatasvir"/>
</dbReference>
<dbReference type="DrugCentral" id="O94956"/>
<dbReference type="GuidetoPHARMACOLOGY" id="1224"/>
<dbReference type="TCDB" id="2.A.60.1.20">
    <property type="family name" value="the organo anion transporter (oat) family"/>
</dbReference>
<dbReference type="GlyCosmos" id="O94956">
    <property type="glycosylation" value="2 sites, No reported glycans"/>
</dbReference>
<dbReference type="GlyGen" id="O94956">
    <property type="glycosylation" value="2 sites"/>
</dbReference>
<dbReference type="iPTMnet" id="O94956"/>
<dbReference type="PhosphoSitePlus" id="O94956"/>
<dbReference type="BioMuta" id="SLCO2B1"/>
<dbReference type="jPOST" id="O94956"/>
<dbReference type="MassIVE" id="O94956"/>
<dbReference type="PaxDb" id="9606-ENSP00000289575"/>
<dbReference type="PeptideAtlas" id="O94956"/>
<dbReference type="ProteomicsDB" id="17820"/>
<dbReference type="ProteomicsDB" id="22826"/>
<dbReference type="ProteomicsDB" id="50577">
    <molecule id="O94956-1"/>
</dbReference>
<dbReference type="ProteomicsDB" id="50578">
    <molecule id="O94956-2"/>
</dbReference>
<dbReference type="Antibodypedia" id="17309">
    <property type="antibodies" value="94 antibodies from 18 providers"/>
</dbReference>
<dbReference type="DNASU" id="11309"/>
<dbReference type="Ensembl" id="ENST00000289575.10">
    <molecule id="O94956-1"/>
    <property type="protein sequence ID" value="ENSP00000289575.5"/>
    <property type="gene ID" value="ENSG00000137491.15"/>
</dbReference>
<dbReference type="Ensembl" id="ENST00000428359.6">
    <molecule id="O94956-3"/>
    <property type="protein sequence ID" value="ENSP00000388912.2"/>
    <property type="gene ID" value="ENSG00000137491.15"/>
</dbReference>
<dbReference type="Ensembl" id="ENST00000454962.6">
    <molecule id="O94956-2"/>
    <property type="protein sequence ID" value="ENSP00000389653.2"/>
    <property type="gene ID" value="ENSG00000137491.15"/>
</dbReference>
<dbReference type="Ensembl" id="ENST00000525650.5">
    <molecule id="O94956-4"/>
    <property type="protein sequence ID" value="ENSP00000436324.1"/>
    <property type="gene ID" value="ENSG00000137491.15"/>
</dbReference>
<dbReference type="GeneID" id="11309"/>
<dbReference type="KEGG" id="hsa:11309"/>
<dbReference type="MANE-Select" id="ENST00000289575.10">
    <property type="protein sequence ID" value="ENSP00000289575.5"/>
    <property type="RefSeq nucleotide sequence ID" value="NM_007256.5"/>
    <property type="RefSeq protein sequence ID" value="NP_009187.1"/>
</dbReference>
<dbReference type="UCSC" id="uc001owc.4">
    <molecule id="O94956-1"/>
    <property type="organism name" value="human"/>
</dbReference>
<dbReference type="AGR" id="HGNC:10962"/>
<dbReference type="CTD" id="11309"/>
<dbReference type="DisGeNET" id="11309"/>
<dbReference type="GeneCards" id="SLCO2B1"/>
<dbReference type="HGNC" id="HGNC:10962">
    <property type="gene designation" value="SLCO2B1"/>
</dbReference>
<dbReference type="HPA" id="ENSG00000137491">
    <property type="expression patterns" value="Tissue enhanced (liver)"/>
</dbReference>
<dbReference type="MalaCards" id="SLCO2B1"/>
<dbReference type="MIM" id="604988">
    <property type="type" value="gene"/>
</dbReference>
<dbReference type="neXtProt" id="NX_O94956"/>
<dbReference type="OpenTargets" id="ENSG00000137491"/>
<dbReference type="PharmGKB" id="PA35845"/>
<dbReference type="VEuPathDB" id="HostDB:ENSG00000137491"/>
<dbReference type="eggNOG" id="KOG3626">
    <property type="taxonomic scope" value="Eukaryota"/>
</dbReference>
<dbReference type="GeneTree" id="ENSGT01130000278312"/>
<dbReference type="HOGENOM" id="CLU_008954_4_2_1"/>
<dbReference type="InParanoid" id="O94956"/>
<dbReference type="OMA" id="FMLGSAM"/>
<dbReference type="OrthoDB" id="5062115at2759"/>
<dbReference type="PAN-GO" id="O94956">
    <property type="GO annotations" value="5 GO annotations based on evolutionary models"/>
</dbReference>
<dbReference type="PhylomeDB" id="O94956"/>
<dbReference type="TreeFam" id="TF317540"/>
<dbReference type="PathwayCommons" id="O94956"/>
<dbReference type="Reactome" id="R-HSA-189483">
    <molecule id="O94956-3"/>
    <property type="pathway name" value="Heme degradation"/>
</dbReference>
<dbReference type="Reactome" id="R-HSA-879518">
    <property type="pathway name" value="Transport of organic anions"/>
</dbReference>
<dbReference type="Reactome" id="R-HSA-9749641">
    <molecule id="O94956-1"/>
    <property type="pathway name" value="Aspirin ADME"/>
</dbReference>
<dbReference type="Reactome" id="R-HSA-9754706">
    <molecule id="O94956-3"/>
    <property type="pathway name" value="Atorvastatin ADME"/>
</dbReference>
<dbReference type="BioGRID-ORCS" id="11309">
    <property type="hits" value="8 hits in 1163 CRISPR screens"/>
</dbReference>
<dbReference type="ChiTaRS" id="SLCO2B1">
    <property type="organism name" value="human"/>
</dbReference>
<dbReference type="GeneWiki" id="SLCO2B1"/>
<dbReference type="GenomeRNAi" id="11309"/>
<dbReference type="Pharos" id="O94956">
    <property type="development level" value="Tchem"/>
</dbReference>
<dbReference type="PRO" id="PR:O94956"/>
<dbReference type="Proteomes" id="UP000005640">
    <property type="component" value="Chromosome 11"/>
</dbReference>
<dbReference type="RNAct" id="O94956">
    <property type="molecule type" value="protein"/>
</dbReference>
<dbReference type="Bgee" id="ENSG00000137491">
    <property type="expression patterns" value="Expressed in right lobe of liver and 172 other cell types or tissues"/>
</dbReference>
<dbReference type="ExpressionAtlas" id="O94956">
    <property type="expression patterns" value="baseline and differential"/>
</dbReference>
<dbReference type="GO" id="GO:0016324">
    <property type="term" value="C:apical plasma membrane"/>
    <property type="evidence" value="ECO:0000314"/>
    <property type="project" value="ARUK-UCL"/>
</dbReference>
<dbReference type="GO" id="GO:0009925">
    <property type="term" value="C:basal plasma membrane"/>
    <property type="evidence" value="ECO:0000314"/>
    <property type="project" value="UniProtKB"/>
</dbReference>
<dbReference type="GO" id="GO:0016323">
    <property type="term" value="C:basolateral plasma membrane"/>
    <property type="evidence" value="ECO:0000318"/>
    <property type="project" value="GO_Central"/>
</dbReference>
<dbReference type="GO" id="GO:0005886">
    <property type="term" value="C:plasma membrane"/>
    <property type="evidence" value="ECO:0000314"/>
    <property type="project" value="ARUK-UCL"/>
</dbReference>
<dbReference type="GO" id="GO:0015125">
    <property type="term" value="F:bile acid transmembrane transporter activity"/>
    <property type="evidence" value="ECO:0000318"/>
    <property type="project" value="GO_Central"/>
</dbReference>
<dbReference type="GO" id="GO:0008514">
    <property type="term" value="F:organic anion transmembrane transporter activity"/>
    <property type="evidence" value="ECO:0000314"/>
    <property type="project" value="UniProtKB"/>
</dbReference>
<dbReference type="GO" id="GO:0015132">
    <property type="term" value="F:prostaglandin transmembrane transporter activity"/>
    <property type="evidence" value="ECO:0000314"/>
    <property type="project" value="UniProtKB"/>
</dbReference>
<dbReference type="GO" id="GO:0015347">
    <property type="term" value="F:sodium-independent organic anion transmembrane transporter activity"/>
    <property type="evidence" value="ECO:0000314"/>
    <property type="project" value="UniProtKB"/>
</dbReference>
<dbReference type="GO" id="GO:0022857">
    <property type="term" value="F:transmembrane transporter activity"/>
    <property type="evidence" value="ECO:0000314"/>
    <property type="project" value="UniProtKB"/>
</dbReference>
<dbReference type="GO" id="GO:0015721">
    <property type="term" value="P:bile acid and bile salt transport"/>
    <property type="evidence" value="ECO:0000318"/>
    <property type="project" value="GO_Central"/>
</dbReference>
<dbReference type="GO" id="GO:0042167">
    <property type="term" value="P:heme catabolic process"/>
    <property type="evidence" value="ECO:0000304"/>
    <property type="project" value="Reactome"/>
</dbReference>
<dbReference type="GO" id="GO:0006811">
    <property type="term" value="P:monoatomic ion transport"/>
    <property type="evidence" value="ECO:0007669"/>
    <property type="project" value="UniProtKB-KW"/>
</dbReference>
<dbReference type="GO" id="GO:0015711">
    <property type="term" value="P:organic anion transport"/>
    <property type="evidence" value="ECO:0000314"/>
    <property type="project" value="ARUK-UCL"/>
</dbReference>
<dbReference type="GO" id="GO:0043252">
    <property type="term" value="P:sodium-independent organic anion transport"/>
    <property type="evidence" value="ECO:0000318"/>
    <property type="project" value="GO_Central"/>
</dbReference>
<dbReference type="GO" id="GO:0055085">
    <property type="term" value="P:transmembrane transport"/>
    <property type="evidence" value="ECO:0000314"/>
    <property type="project" value="ARUK-UCL"/>
</dbReference>
<dbReference type="GO" id="GO:0150104">
    <property type="term" value="P:transport across blood-brain barrier"/>
    <property type="evidence" value="ECO:0000303"/>
    <property type="project" value="ARUK-UCL"/>
</dbReference>
<dbReference type="GO" id="GO:0006805">
    <property type="term" value="P:xenobiotic metabolic process"/>
    <property type="evidence" value="ECO:0000304"/>
    <property type="project" value="Reactome"/>
</dbReference>
<dbReference type="CDD" id="cd17460">
    <property type="entry name" value="MFS_SLCO2B_OATP2B"/>
    <property type="match status" value="1"/>
</dbReference>
<dbReference type="Gene3D" id="1.20.1250.20">
    <property type="entry name" value="MFS general substrate transporter like domains"/>
    <property type="match status" value="1"/>
</dbReference>
<dbReference type="InterPro" id="IPR002350">
    <property type="entry name" value="Kazal_dom"/>
</dbReference>
<dbReference type="InterPro" id="IPR036259">
    <property type="entry name" value="MFS_trans_sf"/>
</dbReference>
<dbReference type="InterPro" id="IPR004156">
    <property type="entry name" value="OATP"/>
</dbReference>
<dbReference type="NCBIfam" id="TIGR00805">
    <property type="entry name" value="oat"/>
    <property type="match status" value="1"/>
</dbReference>
<dbReference type="PANTHER" id="PTHR11388">
    <property type="entry name" value="ORGANIC ANION TRANSPORTER"/>
    <property type="match status" value="1"/>
</dbReference>
<dbReference type="PANTHER" id="PTHR11388:SF87">
    <property type="entry name" value="SOLUTE CARRIER ORGANIC ANION TRANSPORTER FAMILY MEMBER 2B1"/>
    <property type="match status" value="1"/>
</dbReference>
<dbReference type="Pfam" id="PF03137">
    <property type="entry name" value="OATP"/>
    <property type="match status" value="1"/>
</dbReference>
<dbReference type="SUPFAM" id="SSF103473">
    <property type="entry name" value="MFS general substrate transporter"/>
    <property type="match status" value="1"/>
</dbReference>
<dbReference type="PROSITE" id="PS51465">
    <property type="entry name" value="KAZAL_2"/>
    <property type="match status" value="1"/>
</dbReference>
<evidence type="ECO:0000250" key="1">
    <source>
        <dbReference type="UniProtKB" id="Q8BXB6"/>
    </source>
</evidence>
<evidence type="ECO:0000250" key="2">
    <source>
        <dbReference type="UniProtKB" id="Q9JHI3"/>
    </source>
</evidence>
<evidence type="ECO:0000255" key="3"/>
<evidence type="ECO:0000255" key="4">
    <source>
        <dbReference type="PROSITE-ProRule" id="PRU00798"/>
    </source>
</evidence>
<evidence type="ECO:0000256" key="5">
    <source>
        <dbReference type="SAM" id="MobiDB-lite"/>
    </source>
</evidence>
<evidence type="ECO:0000269" key="6">
    <source>
    </source>
</evidence>
<evidence type="ECO:0000269" key="7">
    <source>
    </source>
</evidence>
<evidence type="ECO:0000269" key="8">
    <source>
    </source>
</evidence>
<evidence type="ECO:0000269" key="9">
    <source>
    </source>
</evidence>
<evidence type="ECO:0000269" key="10">
    <source>
    </source>
</evidence>
<evidence type="ECO:0000269" key="11">
    <source>
    </source>
</evidence>
<evidence type="ECO:0000269" key="12">
    <source>
    </source>
</evidence>
<evidence type="ECO:0000269" key="13">
    <source>
    </source>
</evidence>
<evidence type="ECO:0000269" key="14">
    <source>
    </source>
</evidence>
<evidence type="ECO:0000269" key="15">
    <source>
    </source>
</evidence>
<evidence type="ECO:0000269" key="16">
    <source>
    </source>
</evidence>
<evidence type="ECO:0000269" key="17">
    <source>
    </source>
</evidence>
<evidence type="ECO:0000269" key="18">
    <source>
    </source>
</evidence>
<evidence type="ECO:0000269" key="19">
    <source>
    </source>
</evidence>
<evidence type="ECO:0000269" key="20">
    <source>
    </source>
</evidence>
<evidence type="ECO:0000269" key="21">
    <source>
    </source>
</evidence>
<evidence type="ECO:0000269" key="22">
    <source>
    </source>
</evidence>
<evidence type="ECO:0000269" key="23">
    <source>
    </source>
</evidence>
<evidence type="ECO:0000269" key="24">
    <source>
    </source>
</evidence>
<evidence type="ECO:0000269" key="25">
    <source>
    </source>
</evidence>
<evidence type="ECO:0000269" key="26">
    <source>
    </source>
</evidence>
<evidence type="ECO:0000269" key="27">
    <source>
    </source>
</evidence>
<evidence type="ECO:0000269" key="28">
    <source>
    </source>
</evidence>
<evidence type="ECO:0000269" key="29">
    <source ref="25"/>
</evidence>
<evidence type="ECO:0000303" key="30">
    <source>
    </source>
</evidence>
<evidence type="ECO:0000303" key="31">
    <source>
    </source>
</evidence>
<evidence type="ECO:0000303" key="32">
    <source>
    </source>
</evidence>
<evidence type="ECO:0000303" key="33">
    <source>
    </source>
</evidence>
<evidence type="ECO:0000303" key="34">
    <source>
    </source>
</evidence>
<evidence type="ECO:0000303" key="35">
    <source>
    </source>
</evidence>
<evidence type="ECO:0000303" key="36">
    <source ref="2"/>
</evidence>
<evidence type="ECO:0000305" key="37"/>
<evidence type="ECO:0000305" key="38">
    <source>
    </source>
</evidence>
<evidence type="ECO:0000305" key="39">
    <source>
    </source>
</evidence>
<evidence type="ECO:0000305" key="40">
    <source>
    </source>
</evidence>
<evidence type="ECO:0000305" key="41">
    <source>
    </source>
</evidence>
<evidence type="ECO:0000305" key="42">
    <source>
    </source>
</evidence>
<evidence type="ECO:0000305" key="43">
    <source>
    </source>
</evidence>
<evidence type="ECO:0000305" key="44">
    <source>
    </source>
</evidence>
<evidence type="ECO:0000305" key="45">
    <source>
    </source>
</evidence>
<evidence type="ECO:0000305" key="46">
    <source>
    </source>
</evidence>
<evidence type="ECO:0000305" key="47">
    <source>
    </source>
</evidence>
<evidence type="ECO:0000305" key="48">
    <source>
    </source>
</evidence>
<evidence type="ECO:0000305" key="49">
    <source>
    </source>
</evidence>
<evidence type="ECO:0000305" key="50">
    <source>
    </source>
</evidence>
<evidence type="ECO:0000305" key="51">
    <source>
    </source>
</evidence>
<evidence type="ECO:0000305" key="52">
    <source>
    </source>
</evidence>
<evidence type="ECO:0000305" key="53">
    <source>
    </source>
</evidence>
<evidence type="ECO:0000305" key="54">
    <source>
    </source>
</evidence>
<evidence type="ECO:0000305" key="55">
    <source>
    </source>
</evidence>
<evidence type="ECO:0000305" key="56">
    <source ref="25"/>
</evidence>
<evidence type="ECO:0000312" key="57">
    <source>
        <dbReference type="HGNC" id="HGNC:10962"/>
    </source>
</evidence>
<evidence type="ECO:0007744" key="58">
    <source>
    </source>
</evidence>
<evidence type="ECO:0007744" key="59">
    <source>
    </source>
</evidence>
<proteinExistence type="evidence at protein level"/>
<organism>
    <name type="scientific">Homo sapiens</name>
    <name type="common">Human</name>
    <dbReference type="NCBI Taxonomy" id="9606"/>
    <lineage>
        <taxon>Eukaryota</taxon>
        <taxon>Metazoa</taxon>
        <taxon>Chordata</taxon>
        <taxon>Craniata</taxon>
        <taxon>Vertebrata</taxon>
        <taxon>Euteleostomi</taxon>
        <taxon>Mammalia</taxon>
        <taxon>Eutheria</taxon>
        <taxon>Euarchontoglires</taxon>
        <taxon>Primates</taxon>
        <taxon>Haplorrhini</taxon>
        <taxon>Catarrhini</taxon>
        <taxon>Hominidae</taxon>
        <taxon>Homo</taxon>
    </lineage>
</organism>
<sequence>MGPRIGPAGEVPQVPDKETKATMGTENTPGGKASPDPQDVRPSVFHNIKLFVLCHSLLQLAQLMISGYLKSSISTVEKRFGLSSQTSGLLASFNEVGNTALIVFVSYFGSRVHRPRMIGYGAILVALAGLLMTLPHFISEPYRYDNTSPEDMPQDFKASLCLPTTSAPASAPSNGNCSSYTETQHLSVVGIMFVAQTLLGVGGVPIQPFGISYIDDFAHNSNSPLYLGILFAVTMMGPGLAFGLGSLMLRLYVDINQMPEGGISLTIKDPRWVGAWWLGFLIAAGAVALAAIPYFFFPKEMPKEKRELQFRRKVLAVTDSPARKGKDSPSKQSPGESTKKQDGLVQIAPNLTVIQFIKVFPRVLLQTLRHPIFLLVVLSQVCLSSMAAGMATFLPKFLERQFSITASYANLLIGCLSFPSVIVGIVVGGVLVKRLHLGPVGCGALCLLGMLLCLFFSLPLFFIGCSSHQIAGITHQTSAHPGLELSPSCMEACSCPLDGFNPVCDPSTRVEYITPCHAGCSSWVVQDALDNSQVFYTNCSCVVEGNPVLAGSCDSTCSHLVVPFLLLVSLGSALACLTHTPSFMLILRGVKKEDKTLAVGIQFMFLRILAWMPSPVIHGSAIDTTCVHWALSCGRRAVCRYYNNDLLRNRFIGLQFFFKTGSVICFALVLAVLRQQDKEARTKESRSSPAVEQQLLVSGPGKKPEDSRV</sequence>
<reference key="1">
    <citation type="journal article" date="2000" name="Biochem. Biophys. Res. Commun.">
        <title>Molecular identification and characterization of novel members of the human organic anion transporter (OATP) family.</title>
        <authorList>
            <person name="Tamai I."/>
            <person name="Nezu J."/>
            <person name="Uchino H."/>
            <person name="Sai Y."/>
            <person name="Oku A."/>
            <person name="Shimane M."/>
            <person name="Tsuji A."/>
        </authorList>
    </citation>
    <scope>NUCLEOTIDE SEQUENCE [MRNA] (ISOFORM 1)</scope>
    <scope>FUNCTION</scope>
    <scope>TRANSPORTER ACTIVITY</scope>
    <scope>TISSUE SPECIFICITY</scope>
    <source>
        <tissue>Brain</tissue>
    </source>
</reference>
<reference key="2">
    <citation type="submission" date="1999-11" db="EMBL/GenBank/DDBJ databases">
        <title>Identification and characterization of novel human OATP family members.</title>
        <authorList>
            <person name="Wu Y."/>
            <person name="Hsiang B.H."/>
            <person name="Zhu Y."/>
            <person name="Yang W.-P."/>
            <person name="Kirchgessner T.G."/>
        </authorList>
    </citation>
    <scope>NUCLEOTIDE SEQUENCE [MRNA] (ISOFORM 3)</scope>
</reference>
<reference key="3">
    <citation type="journal article" date="1998" name="DNA Res.">
        <title>Prediction of the coding sequences of unidentified human genes. XII. The complete sequences of 100 new cDNA clones from brain which code for large proteins in vitro.</title>
        <authorList>
            <person name="Nagase T."/>
            <person name="Ishikawa K."/>
            <person name="Suyama M."/>
            <person name="Kikuno R."/>
            <person name="Hirosawa M."/>
            <person name="Miyajima N."/>
            <person name="Tanaka A."/>
            <person name="Kotani H."/>
            <person name="Nomura N."/>
            <person name="Ohara O."/>
        </authorList>
    </citation>
    <scope>NUCLEOTIDE SEQUENCE [LARGE SCALE MRNA] (ISOFORM 1)</scope>
    <source>
        <tissue>Brain</tissue>
    </source>
</reference>
<reference key="4">
    <citation type="journal article" date="2004" name="Nat. Genet.">
        <title>Complete sequencing and characterization of 21,243 full-length human cDNAs.</title>
        <authorList>
            <person name="Ota T."/>
            <person name="Suzuki Y."/>
            <person name="Nishikawa T."/>
            <person name="Otsuki T."/>
            <person name="Sugiyama T."/>
            <person name="Irie R."/>
            <person name="Wakamatsu A."/>
            <person name="Hayashi K."/>
            <person name="Sato H."/>
            <person name="Nagai K."/>
            <person name="Kimura K."/>
            <person name="Makita H."/>
            <person name="Sekine M."/>
            <person name="Obayashi M."/>
            <person name="Nishi T."/>
            <person name="Shibahara T."/>
            <person name="Tanaka T."/>
            <person name="Ishii S."/>
            <person name="Yamamoto J."/>
            <person name="Saito K."/>
            <person name="Kawai Y."/>
            <person name="Isono Y."/>
            <person name="Nakamura Y."/>
            <person name="Nagahari K."/>
            <person name="Murakami K."/>
            <person name="Yasuda T."/>
            <person name="Iwayanagi T."/>
            <person name="Wagatsuma M."/>
            <person name="Shiratori A."/>
            <person name="Sudo H."/>
            <person name="Hosoiri T."/>
            <person name="Kaku Y."/>
            <person name="Kodaira H."/>
            <person name="Kondo H."/>
            <person name="Sugawara M."/>
            <person name="Takahashi M."/>
            <person name="Kanda K."/>
            <person name="Yokoi T."/>
            <person name="Furuya T."/>
            <person name="Kikkawa E."/>
            <person name="Omura Y."/>
            <person name="Abe K."/>
            <person name="Kamihara K."/>
            <person name="Katsuta N."/>
            <person name="Sato K."/>
            <person name="Tanikawa M."/>
            <person name="Yamazaki M."/>
            <person name="Ninomiya K."/>
            <person name="Ishibashi T."/>
            <person name="Yamashita H."/>
            <person name="Murakawa K."/>
            <person name="Fujimori K."/>
            <person name="Tanai H."/>
            <person name="Kimata M."/>
            <person name="Watanabe M."/>
            <person name="Hiraoka S."/>
            <person name="Chiba Y."/>
            <person name="Ishida S."/>
            <person name="Ono Y."/>
            <person name="Takiguchi S."/>
            <person name="Watanabe S."/>
            <person name="Yosida M."/>
            <person name="Hotuta T."/>
            <person name="Kusano J."/>
            <person name="Kanehori K."/>
            <person name="Takahashi-Fujii A."/>
            <person name="Hara H."/>
            <person name="Tanase T.-O."/>
            <person name="Nomura Y."/>
            <person name="Togiya S."/>
            <person name="Komai F."/>
            <person name="Hara R."/>
            <person name="Takeuchi K."/>
            <person name="Arita M."/>
            <person name="Imose N."/>
            <person name="Musashino K."/>
            <person name="Yuuki H."/>
            <person name="Oshima A."/>
            <person name="Sasaki N."/>
            <person name="Aotsuka S."/>
            <person name="Yoshikawa Y."/>
            <person name="Matsunawa H."/>
            <person name="Ichihara T."/>
            <person name="Shiohata N."/>
            <person name="Sano S."/>
            <person name="Moriya S."/>
            <person name="Momiyama H."/>
            <person name="Satoh N."/>
            <person name="Takami S."/>
            <person name="Terashima Y."/>
            <person name="Suzuki O."/>
            <person name="Nakagawa S."/>
            <person name="Senoh A."/>
            <person name="Mizoguchi H."/>
            <person name="Goto Y."/>
            <person name="Shimizu F."/>
            <person name="Wakebe H."/>
            <person name="Hishigaki H."/>
            <person name="Watanabe T."/>
            <person name="Sugiyama A."/>
            <person name="Takemoto M."/>
            <person name="Kawakami B."/>
            <person name="Yamazaki M."/>
            <person name="Watanabe K."/>
            <person name="Kumagai A."/>
            <person name="Itakura S."/>
            <person name="Fukuzumi Y."/>
            <person name="Fujimori Y."/>
            <person name="Komiyama M."/>
            <person name="Tashiro H."/>
            <person name="Tanigami A."/>
            <person name="Fujiwara T."/>
            <person name="Ono T."/>
            <person name="Yamada K."/>
            <person name="Fujii Y."/>
            <person name="Ozaki K."/>
            <person name="Hirao M."/>
            <person name="Ohmori Y."/>
            <person name="Kawabata A."/>
            <person name="Hikiji T."/>
            <person name="Kobatake N."/>
            <person name="Inagaki H."/>
            <person name="Ikema Y."/>
            <person name="Okamoto S."/>
            <person name="Okitani R."/>
            <person name="Kawakami T."/>
            <person name="Noguchi S."/>
            <person name="Itoh T."/>
            <person name="Shigeta K."/>
            <person name="Senba T."/>
            <person name="Matsumura K."/>
            <person name="Nakajima Y."/>
            <person name="Mizuno T."/>
            <person name="Morinaga M."/>
            <person name="Sasaki M."/>
            <person name="Togashi T."/>
            <person name="Oyama M."/>
            <person name="Hata H."/>
            <person name="Watanabe M."/>
            <person name="Komatsu T."/>
            <person name="Mizushima-Sugano J."/>
            <person name="Satoh T."/>
            <person name="Shirai Y."/>
            <person name="Takahashi Y."/>
            <person name="Nakagawa K."/>
            <person name="Okumura K."/>
            <person name="Nagase T."/>
            <person name="Nomura N."/>
            <person name="Kikuchi H."/>
            <person name="Masuho Y."/>
            <person name="Yamashita R."/>
            <person name="Nakai K."/>
            <person name="Yada T."/>
            <person name="Nakamura Y."/>
            <person name="Ohara O."/>
            <person name="Isogai T."/>
            <person name="Sugano S."/>
        </authorList>
    </citation>
    <scope>NUCLEOTIDE SEQUENCE [LARGE SCALE MRNA] (ISOFORMS 1; 3 AND 4)</scope>
    <scope>VARIANT PHE-486</scope>
    <source>
        <tissue>Amygdala</tissue>
        <tissue>Thalamus</tissue>
    </source>
</reference>
<reference key="5">
    <citation type="journal article" date="2007" name="BMC Genomics">
        <title>The full-ORF clone resource of the German cDNA consortium.</title>
        <authorList>
            <person name="Bechtel S."/>
            <person name="Rosenfelder H."/>
            <person name="Duda A."/>
            <person name="Schmidt C.P."/>
            <person name="Ernst U."/>
            <person name="Wellenreuther R."/>
            <person name="Mehrle A."/>
            <person name="Schuster C."/>
            <person name="Bahr A."/>
            <person name="Bloecker H."/>
            <person name="Heubner D."/>
            <person name="Hoerlein A."/>
            <person name="Michel G."/>
            <person name="Wedler H."/>
            <person name="Koehrer K."/>
            <person name="Ottenwaelder B."/>
            <person name="Poustka A."/>
            <person name="Wiemann S."/>
            <person name="Schupp I."/>
        </authorList>
    </citation>
    <scope>NUCLEOTIDE SEQUENCE [LARGE SCALE MRNA] (ISOFORM 2)</scope>
    <source>
        <tissue>Uterus</tissue>
    </source>
</reference>
<reference key="6">
    <citation type="journal article" date="2006" name="Nature">
        <title>Human chromosome 11 DNA sequence and analysis including novel gene identification.</title>
        <authorList>
            <person name="Taylor T.D."/>
            <person name="Noguchi H."/>
            <person name="Totoki Y."/>
            <person name="Toyoda A."/>
            <person name="Kuroki Y."/>
            <person name="Dewar K."/>
            <person name="Lloyd C."/>
            <person name="Itoh T."/>
            <person name="Takeda T."/>
            <person name="Kim D.-W."/>
            <person name="She X."/>
            <person name="Barlow K.F."/>
            <person name="Bloom T."/>
            <person name="Bruford E."/>
            <person name="Chang J.L."/>
            <person name="Cuomo C.A."/>
            <person name="Eichler E."/>
            <person name="FitzGerald M.G."/>
            <person name="Jaffe D.B."/>
            <person name="LaButti K."/>
            <person name="Nicol R."/>
            <person name="Park H.-S."/>
            <person name="Seaman C."/>
            <person name="Sougnez C."/>
            <person name="Yang X."/>
            <person name="Zimmer A.R."/>
            <person name="Zody M.C."/>
            <person name="Birren B.W."/>
            <person name="Nusbaum C."/>
            <person name="Fujiyama A."/>
            <person name="Hattori M."/>
            <person name="Rogers J."/>
            <person name="Lander E.S."/>
            <person name="Sakaki Y."/>
        </authorList>
    </citation>
    <scope>NUCLEOTIDE SEQUENCE [LARGE SCALE GENOMIC DNA]</scope>
</reference>
<reference key="7">
    <citation type="submission" date="2005-07" db="EMBL/GenBank/DDBJ databases">
        <authorList>
            <person name="Mural R.J."/>
            <person name="Istrail S."/>
            <person name="Sutton G.G."/>
            <person name="Florea L."/>
            <person name="Halpern A.L."/>
            <person name="Mobarry C.M."/>
            <person name="Lippert R."/>
            <person name="Walenz B."/>
            <person name="Shatkay H."/>
            <person name="Dew I."/>
            <person name="Miller J.R."/>
            <person name="Flanigan M.J."/>
            <person name="Edwards N.J."/>
            <person name="Bolanos R."/>
            <person name="Fasulo D."/>
            <person name="Halldorsson B.V."/>
            <person name="Hannenhalli S."/>
            <person name="Turner R."/>
            <person name="Yooseph S."/>
            <person name="Lu F."/>
            <person name="Nusskern D.R."/>
            <person name="Shue B.C."/>
            <person name="Zheng X.H."/>
            <person name="Zhong F."/>
            <person name="Delcher A.L."/>
            <person name="Huson D.H."/>
            <person name="Kravitz S.A."/>
            <person name="Mouchard L."/>
            <person name="Reinert K."/>
            <person name="Remington K.A."/>
            <person name="Clark A.G."/>
            <person name="Waterman M.S."/>
            <person name="Eichler E.E."/>
            <person name="Adams M.D."/>
            <person name="Hunkapiller M.W."/>
            <person name="Myers E.W."/>
            <person name="Venter J.C."/>
        </authorList>
    </citation>
    <scope>NUCLEOTIDE SEQUENCE [LARGE SCALE GENOMIC DNA]</scope>
</reference>
<reference key="8">
    <citation type="journal article" date="2004" name="Genome Res.">
        <title>The status, quality, and expansion of the NIH full-length cDNA project: the Mammalian Gene Collection (MGC).</title>
        <authorList>
            <consortium name="The MGC Project Team"/>
        </authorList>
    </citation>
    <scope>NUCLEOTIDE SEQUENCE [LARGE SCALE MRNA] (ISOFORM 1)</scope>
    <source>
        <tissue>Brain</tissue>
    </source>
</reference>
<reference key="9">
    <citation type="journal article" date="2001" name="Gastroenterology">
        <title>Organic anion-transporting polypeptide B (OATP-B) and its functional comparison with three other OATPs of human liver.</title>
        <authorList>
            <person name="Kullak-Ublick G.A."/>
            <person name="Ismair M.G."/>
            <person name="Stieger B."/>
            <person name="Landmann L."/>
            <person name="Huber R."/>
            <person name="Pizzagalli F."/>
            <person name="Fattinger K."/>
            <person name="Meier P.J."/>
            <person name="Hagenbuch B."/>
        </authorList>
    </citation>
    <scope>FUNCTION</scope>
    <scope>TRANSPORTER ACTIVITY</scope>
    <scope>BIOPHYSICOCHEMICAL PROPERTIES</scope>
    <scope>SUBCELLULAR LOCATION</scope>
    <scope>TISSUE SPECIFICITY</scope>
</reference>
<reference key="10">
    <citation type="journal article" date="2002" name="J. Clin. Endocrinol. Metab.">
        <title>Characterization of an organic anion-transporting polypeptide (OATP-B) in human placenta.</title>
        <authorList>
            <person name="St-Pierre M.V."/>
            <person name="Hagenbuch B."/>
            <person name="Ugele B."/>
            <person name="Meier P.J."/>
            <person name="Stallmach T."/>
        </authorList>
    </citation>
    <scope>FUNCTION</scope>
    <scope>TRANSPORTER ACTIVITY</scope>
    <scope>BIOPHYSICOCHEMICAL PROPERTIES</scope>
    <scope>SUBCELLULAR LOCATION</scope>
    <scope>TISSUE SPECIFICITY</scope>
</reference>
<reference key="11">
    <citation type="journal article" date="2003" name="Am. J. Physiol.">
        <title>Characterization and identification of steroid sulfate transporters of human placenta.</title>
        <authorList>
            <person name="Ugele B."/>
            <person name="St-Pierre M.V."/>
            <person name="Pihusch M."/>
            <person name="Bahn A."/>
            <person name="Hantschmann P."/>
        </authorList>
    </citation>
    <scope>FUNCTION</scope>
    <scope>SUBCELLULAR LOCATION</scope>
    <scope>TISSUE SPECIFICITY</scope>
</reference>
<reference key="12">
    <citation type="journal article" date="2003" name="J. Pharmacol. Exp. Ther.">
        <title>Involvement of human organic anion transporting polypeptide OATP-B (SLC21A9) in pH-dependent transport across intestinal apical membrane.</title>
        <authorList>
            <person name="Kobayashi D."/>
            <person name="Nozawa T."/>
            <person name="Imai K."/>
            <person name="Nezu J."/>
            <person name="Tsuji A."/>
            <person name="Tamai I."/>
        </authorList>
    </citation>
    <scope>FUNCTION</scope>
    <scope>TRANSPORTER ACTIVITY</scope>
    <scope>BIOPHYSICOCHEMICAL PROPERTIES</scope>
    <scope>TISSUE SPECIFICITY</scope>
    <scope>SUBCELLULAR LOCATION</scope>
</reference>
<reference key="13">
    <citation type="journal article" date="2004" name="J. Pharmacol. Exp. Ther.">
        <title>Functional characterization of pH-sensitive organic anion transporting polypeptide OATP-B in human.</title>
        <authorList>
            <person name="Nozawa T."/>
            <person name="Imai K."/>
            <person name="Nezu J."/>
            <person name="Tsuji A."/>
            <person name="Tamai I."/>
        </authorList>
    </citation>
    <scope>FUNCTION</scope>
    <scope>TRANSPORTER ACTIVITY</scope>
    <scope>BIOPHYSICOCHEMICAL PROPERTIES</scope>
</reference>
<reference key="14">
    <citation type="journal article" date="2006" name="Mol. Pharmacol.">
        <title>Modification of OATP2B1-mediated transport by steroid hormones.</title>
        <authorList>
            <person name="Grube M."/>
            <person name="Koeck K."/>
            <person name="Karner S."/>
            <person name="Reuther S."/>
            <person name="Ritter C.A."/>
            <person name="Jedlitschky G."/>
            <person name="Kroemer H.K."/>
        </authorList>
    </citation>
    <scope>FUNCTION</scope>
    <scope>TRANSPORTER ACTIVITY</scope>
    <scope>BIOPHYSICOCHEMICAL PROPERTIES</scope>
    <scope>ACTIVITY REGULATION</scope>
</reference>
<reference key="15">
    <citation type="journal article" date="2006" name="Mol. Pharmacol.">
        <title>Functional analysis of the extracellular cysteine residues in the human organic anion transporting polypeptide, OATP2B1.</title>
        <authorList>
            <person name="Hanggi E."/>
            <person name="Grundschober A.F."/>
            <person name="Leuthold S."/>
            <person name="Meier P.J."/>
            <person name="St-Pierre M.V."/>
        </authorList>
    </citation>
    <scope>PRESENCE OF DISULFIDE BONDS</scope>
</reference>
<reference key="16">
    <citation type="journal article" date="2008" name="J. Steroid Biochem. Mol. Biol.">
        <title>Functional differences in steroid sulfate uptake of organic anion transporter 4 (OAT4) and organic anion transporting polypeptide 2B1 (OATP2B1) in human placenta.</title>
        <authorList>
            <person name="Ugele B."/>
            <person name="Bahn A."/>
            <person name="Rex-Haffner M."/>
        </authorList>
    </citation>
    <scope>FUNCTION</scope>
    <scope>TRANSPORTER ACTIVITY</scope>
    <scope>BIOPHYSICOCHEMICAL PROPERTIES</scope>
</reference>
<reference key="17">
    <citation type="journal article" date="2009" name="Am. J. Physiol.">
        <title>Mechanisms of pH-gradient driven transport mediated by organic anion polypeptide transporters.</title>
        <authorList>
            <person name="Leuthold S."/>
            <person name="Hagenbuch B."/>
            <person name="Mohebbi N."/>
            <person name="Wagner C.A."/>
            <person name="Meier P.J."/>
            <person name="Stieger B."/>
        </authorList>
    </citation>
    <scope>FUNCTION</scope>
    <scope>TRANSPORTER ACTIVITY</scope>
    <scope>BIOPHYSICOCHEMICAL PROPERTIES</scope>
    <scope>DOMAIN</scope>
</reference>
<reference key="18">
    <citation type="journal article" date="2010" name="J. Pharmacol. Exp. Ther.">
        <title>pH dependence of organic anion-transporting polypeptide 2B1 in Caco-2 cells: potential role in antiretroviral drug oral bioavailability and drug-drug interactions.</title>
        <authorList>
            <person name="Kis O."/>
            <person name="Zastre J.A."/>
            <person name="Ramaswamy M."/>
            <person name="Bendayan R."/>
        </authorList>
    </citation>
    <scope>FUNCTION</scope>
    <scope>TRANSPORTER ACTIVITY</scope>
    <scope>BIOPHYSICOCHEMICAL PROPERTIES</scope>
</reference>
<reference key="19">
    <citation type="journal article" date="2012" name="Drug Metab. Pharmacokinet.">
        <title>Functional pleiotropy of organic anion transporting polypeptide OATP2B1 due to multiple binding sites.</title>
        <authorList>
            <person name="Shirasaka Y."/>
            <person name="Mori T."/>
            <person name="Shichiri M."/>
            <person name="Nakanishi T."/>
            <person name="Tamai I."/>
        </authorList>
    </citation>
    <scope>FUNCTION</scope>
    <scope>TRANSPORTER ACTIVITY</scope>
    <scope>BIOPHYSICOCHEMICAL PROPERTIES</scope>
</reference>
<reference key="20">
    <citation type="journal article" date="2013" name="J. Proteome Res.">
        <title>Toward a comprehensive characterization of a human cancer cell phosphoproteome.</title>
        <authorList>
            <person name="Zhou H."/>
            <person name="Di Palma S."/>
            <person name="Preisinger C."/>
            <person name="Peng M."/>
            <person name="Polat A.N."/>
            <person name="Heck A.J."/>
            <person name="Mohammed S."/>
        </authorList>
    </citation>
    <scope>PHOSPHORYLATION [LARGE SCALE ANALYSIS] AT SER-320</scope>
    <scope>IDENTIFICATION BY MASS SPECTROMETRY [LARGE SCALE ANALYSIS]</scope>
    <source>
        <tissue>Erythroleukemia</tissue>
    </source>
</reference>
<reference key="21">
    <citation type="journal article" date="2013" name="Mol. Pharmacol.">
        <title>Transport function and transcriptional regulation of a liver-enriched human organic anion transporting polypeptide 2B1 transcriptional start site variant.</title>
        <authorList>
            <person name="Knauer M.J."/>
            <person name="Girdwood A.J."/>
            <person name="Kim R.B."/>
            <person name="Tirona R.G."/>
        </authorList>
    </citation>
    <scope>FUNCTION</scope>
    <scope>TRANSPORTER ACTIVITY</scope>
    <scope>ALTERNATIVE PROMOTER USAGE</scope>
    <scope>TISSUE SPECIFICITY</scope>
</reference>
<reference key="22">
    <citation type="journal article" date="2014" name="J. Proteomics">
        <title>An enzyme assisted RP-RPLC approach for in-depth analysis of human liver phosphoproteome.</title>
        <authorList>
            <person name="Bian Y."/>
            <person name="Song C."/>
            <person name="Cheng K."/>
            <person name="Dong M."/>
            <person name="Wang F."/>
            <person name="Huang J."/>
            <person name="Sun D."/>
            <person name="Wang L."/>
            <person name="Ye M."/>
            <person name="Zou H."/>
        </authorList>
    </citation>
    <scope>PHOSPHORYLATION [LARGE SCALE ANALYSIS] AT THR-318 AND SER-320</scope>
    <scope>IDENTIFICATION BY MASS SPECTROMETRY [LARGE SCALE ANALYSIS]</scope>
    <source>
        <tissue>Liver</tissue>
    </source>
</reference>
<reference key="23">
    <citation type="journal article" date="2015" name="J. Physiol. (Lond.)">
        <title>Glutamate cycling may drive organic anion transport on the basal membrane of human placental syncytiotrophoblast.</title>
        <authorList>
            <person name="Lofthouse E.M."/>
            <person name="Brooks S."/>
            <person name="Cleal J.K."/>
            <person name="Hanson M.A."/>
            <person name="Poore K.R."/>
            <person name="O'Kelly I.M."/>
            <person name="Lewis R.M."/>
        </authorList>
    </citation>
    <scope>FUNCTION</scope>
    <scope>TRANSPORTER ACTIVITY</scope>
    <scope>TISSUE SPECIFICITY</scope>
</reference>
<reference key="24">
    <citation type="journal article" date="2015" name="Pflugers Arch.">
        <title>Differential cellular expression of organic anion transporting peptides OATP1A2 and OATP2B1 in the human retina and brain: implications for carrier-mediated transport of neuropeptides and neurosteriods in the CNS.</title>
        <authorList>
            <person name="Gao B."/>
            <person name="Vavricka S.R."/>
            <person name="Meier P.J."/>
            <person name="Stieger B."/>
        </authorList>
    </citation>
    <scope>FUNCTION</scope>
    <scope>TRANSPORTER ACTIVITY</scope>
    <scope>BIOPHYSICOCHEMICAL PROPERTIES</scope>
    <scope>SUBCELLULAR LOCATION</scope>
    <scope>TISSUE SPECIFICITY</scope>
</reference>
<reference key="25">
    <citation type="journal article" date="2016" name="Med. Chem. Commun.">
        <title>Molecular localization and characterization of multiple binding sites of organic anion transporting polypeptide 2B1 (OATP2B1) as the mechanism for substrate and modulator dependent drug-drug interaction.</title>
        <authorList>
            <person name="Hoshino Y."/>
            <person name="Fujita D."/>
            <person name="Nakanishi T."/>
            <person name="Tamai I."/>
        </authorList>
    </citation>
    <scope>FUNCTION</scope>
    <scope>TRANSPORTER ACTIVITY</scope>
    <scope>ACTIVITY REGULATION</scope>
    <scope>BIOPHYSICOCHEMICAL PROPERTIES</scope>
    <scope>MUTAGENESIS OF HIS-46; HIS-55; HIS-113; HIS-136; HIS-185; HIS-219; HIS-370; HIS-436; HIS-468; HIS-475; HIS-480; HIS-517; HIS-579; ARG-607; HIS-618 AND HIS-628</scope>
</reference>
<reference key="26">
    <citation type="journal article" date="2016" name="Mol. Pharm.">
        <title>Tryptophan Residue Located at the Middle of Putative Transmembrane Domain 11 Is Critical for the Function of Organic Anion Transporting Polypeptide 2B1.</title>
        <authorList>
            <person name="Bian J."/>
            <person name="Jin M."/>
            <person name="Yue M."/>
            <person name="Wang M."/>
            <person name="Zhang H."/>
            <person name="Gui C."/>
        </authorList>
    </citation>
    <scope>FUNCTION</scope>
    <scope>TRANSPORTER ACTIVITY</scope>
    <scope>BIOPHYSICOCHEMICAL PROPERTIES</scope>
    <scope>MUTAGENESIS OF TRP-272; TRP-276; TRP-277; TRP-523; ARG-607; TRP-611 AND TRP-629</scope>
</reference>
<reference key="27">
    <citation type="journal article" date="2016" name="Xenobiotica">
        <title>Organic anion transporting polypeptide (OATP)-mediated transport of coproporphyrins I and III.</title>
        <authorList>
            <person name="Bednarczyk D."/>
            <person name="Boiselle C."/>
        </authorList>
    </citation>
    <scope>FUNCTION</scope>
    <scope>TRANSPORTER ACTIVITY</scope>
    <scope>BIOPHYSICOCHEMICAL PROPERTIES</scope>
</reference>
<reference key="28">
    <citation type="journal article" date="2017" name="J. Pharm. Sci.">
        <title>The Organic Anion-Transporting Peptide 2B1 Is Localized in the Basolateral Membrane of the Human Jejunum and Caco-2 Monolayers.</title>
        <authorList>
            <person name="Keiser M."/>
            <person name="Kaltheuner L."/>
            <person name="Wildberg C."/>
            <person name="Mueller J."/>
            <person name="Grube M."/>
            <person name="Partecke L.I."/>
            <person name="Heidecke C.D."/>
            <person name="Oswald S."/>
        </authorList>
    </citation>
    <scope>FUNCTION</scope>
    <scope>TRANSPORTER ACTIVITY</scope>
    <scope>SUBCELLULAR LOCATION</scope>
    <scope>TISSUE SPECIFICITY</scope>
</reference>
<reference key="29">
    <citation type="journal article" date="2018" name="Mol. Pharmacol.">
        <title>Transmembrane Domain 1 of Human Organic Anion Transporting Polypeptide 2B1 Is Essential for Transporter Function and Stability.</title>
        <authorList>
            <person name="Fang Z."/>
            <person name="Huang J."/>
            <person name="Chen J."/>
            <person name="Xu S."/>
            <person name="Xiang Z."/>
            <person name="Hong M."/>
        </authorList>
    </citation>
    <scope>FUNCTION</scope>
    <scope>TRANSPORTER ACTIVITY</scope>
    <scope>DOMAIN</scope>
    <scope>BIOPHYSICOCHEMICAL PROPERTIES</scope>
    <scope>MUTAGENESIS OF LYS-49; LEU-50; PHE-51; VAL-52; LEU-53; CYS-54; HIS-55; SER-56; LEU-57; LEU-58; GLN-59; LEU-60; ALA-61; GLN-62; LEU-63; MET-64; ILE-65; SER-66; GLY-67; TYR-68 AND LEU-69</scope>
</reference>
<reference key="30">
    <citation type="journal article" date="2021" name="Drug Metab. Pharmacokinet.">
        <title>Differences in transport function of the human and rat orthologue of the Organic Anion Transporting Polypeptide 2B1 (OATP2B1).</title>
        <authorList>
            <person name="Hussner J."/>
            <person name="Foletti A."/>
            <person name="Seibert I."/>
            <person name="Fuchs A."/>
            <person name="Schuler E."/>
            <person name="Malagnino V."/>
            <person name="Grube M."/>
            <person name="Meyer Zu Schwabedissen H.E."/>
        </authorList>
    </citation>
    <scope>FUNCTION</scope>
    <scope>TRANSPORTER ACTIVITY</scope>
</reference>
<reference key="31">
    <citation type="journal article" date="2022" name="Drug Metab. Dispos.">
        <title>Localization of Xenobiotic Transporters Expressed at the Human Blood-Testis Barrier.</title>
        <authorList>
            <person name="Hau R.K."/>
            <person name="Klein R.R."/>
            <person name="Wright S.H."/>
            <person name="Cherrington N.J."/>
        </authorList>
    </citation>
    <scope>FUNCTION</scope>
    <scope>SUBCELLULAR LOCATION</scope>
    <scope>TISSUE SPECIFICITY</scope>
</reference>
<reference key="32">
    <citation type="journal article" date="2022" name="Mol. Cell">
        <title>Metabolic-scale gene activation screens identify SLCO2B1 as a heme transporter that enhances cellular iron availability.</title>
        <authorList>
            <person name="Unlu G."/>
            <person name="Prizer B."/>
            <person name="Erdal R."/>
            <person name="Yeh H.W."/>
            <person name="Bayraktar E.C."/>
            <person name="Birsoy K."/>
        </authorList>
    </citation>
    <scope>FUNCTION</scope>
    <scope>TRANSPORTER ACTIVITY</scope>
</reference>
<reference key="33">
    <citation type="journal article" date="2006" name="Science">
        <title>The consensus coding sequences of human breast and colorectal cancers.</title>
        <authorList>
            <person name="Sjoeblom T."/>
            <person name="Jones S."/>
            <person name="Wood L.D."/>
            <person name="Parsons D.W."/>
            <person name="Lin J."/>
            <person name="Barber T.D."/>
            <person name="Mandelker D."/>
            <person name="Leary R.J."/>
            <person name="Ptak J."/>
            <person name="Silliman N."/>
            <person name="Szabo S."/>
            <person name="Buckhaults P."/>
            <person name="Farrell C."/>
            <person name="Meeh P."/>
            <person name="Markowitz S.D."/>
            <person name="Willis J."/>
            <person name="Dawson D."/>
            <person name="Willson J.K.V."/>
            <person name="Gazdar A.F."/>
            <person name="Hartigan J."/>
            <person name="Wu L."/>
            <person name="Liu C."/>
            <person name="Parmigiani G."/>
            <person name="Park B.H."/>
            <person name="Bachman K.E."/>
            <person name="Papadopoulos N."/>
            <person name="Vogelstein B."/>
            <person name="Kinzler K.W."/>
            <person name="Velculescu V.E."/>
        </authorList>
    </citation>
    <scope>VARIANT [LARGE SCALE ANALYSIS] LYS-77</scope>
</reference>
<name>SO2B1_HUMAN</name>
<accession>O94956</accession>
<accession>A0A024R5I4</accession>
<accession>A8K2G9</accession>
<accession>B4DGA9</accession>
<accession>B4DTB0</accession>
<accession>E7ERN5</accession>
<accession>E9PPU8</accession>
<accession>Q9H2Z0</accession>
<accession>Q9UFU1</accession>
<feature type="chain" id="PRO_0000191061" description="Solute carrier organic anion transporter family member 2B1">
    <location>
        <begin position="1"/>
        <end position="709"/>
    </location>
</feature>
<feature type="topological domain" description="Cytoplasmic" evidence="3">
    <location>
        <begin position="1"/>
        <end position="49"/>
    </location>
</feature>
<feature type="transmembrane region" description="Helical; Name=1" evidence="3">
    <location>
        <begin position="50"/>
        <end position="69"/>
    </location>
</feature>
<feature type="topological domain" description="Extracellular" evidence="3">
    <location>
        <begin position="70"/>
        <end position="88"/>
    </location>
</feature>
<feature type="transmembrane region" description="Helical; Name=2" evidence="3">
    <location>
        <begin position="89"/>
        <end position="109"/>
    </location>
</feature>
<feature type="topological domain" description="Cytoplasmic" evidence="3">
    <location>
        <begin position="110"/>
        <end position="115"/>
    </location>
</feature>
<feature type="transmembrane region" description="Helical; Name=3" evidence="3">
    <location>
        <begin position="116"/>
        <end position="140"/>
    </location>
</feature>
<feature type="topological domain" description="Extracellular" evidence="3">
    <location>
        <begin position="141"/>
        <end position="185"/>
    </location>
</feature>
<feature type="transmembrane region" description="Helical; Name=4" evidence="3">
    <location>
        <begin position="186"/>
        <end position="215"/>
    </location>
</feature>
<feature type="topological domain" description="Cytoplasmic" evidence="3">
    <location>
        <begin position="216"/>
        <end position="234"/>
    </location>
</feature>
<feature type="transmembrane region" description="Helical; Name=5" evidence="3">
    <location>
        <begin position="235"/>
        <end position="255"/>
    </location>
</feature>
<feature type="topological domain" description="Extracellular" evidence="3">
    <location>
        <begin position="256"/>
        <end position="273"/>
    </location>
</feature>
<feature type="transmembrane region" description="Helical; Name=6" evidence="3">
    <location>
        <begin position="274"/>
        <end position="298"/>
    </location>
</feature>
<feature type="topological domain" description="Cytoplasmic" evidence="3">
    <location>
        <begin position="299"/>
        <end position="366"/>
    </location>
</feature>
<feature type="transmembrane region" description="Helical; Name=7" evidence="3">
    <location>
        <begin position="367"/>
        <end position="388"/>
    </location>
</feature>
<feature type="topological domain" description="Extracellular" evidence="3">
    <location>
        <begin position="389"/>
        <end position="408"/>
    </location>
</feature>
<feature type="transmembrane region" description="Helical; Name=8" evidence="3">
    <location>
        <begin position="409"/>
        <end position="432"/>
    </location>
</feature>
<feature type="topological domain" description="Cytoplasmic" evidence="3">
    <location>
        <begin position="433"/>
        <end position="436"/>
    </location>
</feature>
<feature type="transmembrane region" description="Helical; Name=9" evidence="3">
    <location>
        <begin position="437"/>
        <end position="460"/>
    </location>
</feature>
<feature type="topological domain" description="Extracellular" evidence="3">
    <location>
        <begin position="461"/>
        <end position="564"/>
    </location>
</feature>
<feature type="transmembrane region" description="Helical; Name=10" evidence="3">
    <location>
        <begin position="565"/>
        <end position="587"/>
    </location>
</feature>
<feature type="topological domain" description="Cytoplasmic" evidence="3">
    <location>
        <begin position="588"/>
        <end position="596"/>
    </location>
</feature>
<feature type="transmembrane region" description="Helical; Name=11" evidence="3">
    <location>
        <begin position="597"/>
        <end position="622"/>
    </location>
</feature>
<feature type="topological domain" description="Extracellular" evidence="3">
    <location>
        <begin position="623"/>
        <end position="655"/>
    </location>
</feature>
<feature type="transmembrane region" description="Helical; Name=12" evidence="3">
    <location>
        <begin position="656"/>
        <end position="673"/>
    </location>
</feature>
<feature type="topological domain" description="Cytoplasmic" evidence="3">
    <location>
        <begin position="674"/>
        <end position="709"/>
    </location>
</feature>
<feature type="domain" description="Kazal-like" evidence="4">
    <location>
        <begin position="483"/>
        <end position="543"/>
    </location>
</feature>
<feature type="region of interest" description="Disordered" evidence="5">
    <location>
        <begin position="1"/>
        <end position="38"/>
    </location>
</feature>
<feature type="region of interest" description="Required for E1S and taurocholate transport; required for transporter stability" evidence="25">
    <location>
        <begin position="51"/>
        <end position="69"/>
    </location>
</feature>
<feature type="region of interest" description="Disordered" evidence="5">
    <location>
        <begin position="319"/>
        <end position="342"/>
    </location>
</feature>
<feature type="region of interest" description="Disordered" evidence="5">
    <location>
        <begin position="679"/>
        <end position="709"/>
    </location>
</feature>
<feature type="site" description="Implicated in low-affinity site for E1S transport" evidence="29">
    <location>
        <position position="579"/>
    </location>
</feature>
<feature type="site" description="Essential for E1S and PGE2 transport activity and may interact with these substrates" evidence="23 29">
    <location>
        <position position="607"/>
    </location>
</feature>
<feature type="site" description="Essential for E1S transport activity and may interact with this substrate" evidence="23">
    <location>
        <position position="611"/>
    </location>
</feature>
<feature type="site" description="Implicated in high-affinity site for E1S transport" evidence="29">
    <location>
        <position position="618"/>
    </location>
</feature>
<feature type="modified residue" description="Phosphoserine" evidence="1">
    <location>
        <position position="34"/>
    </location>
</feature>
<feature type="modified residue" description="Phosphothreonine" evidence="59">
    <location>
        <position position="318"/>
    </location>
</feature>
<feature type="modified residue" description="Phosphoserine" evidence="58 59">
    <location>
        <position position="320"/>
    </location>
</feature>
<feature type="glycosylation site" description="N-linked (GlcNAc...) asparagine" evidence="3">
    <location>
        <position position="176"/>
    </location>
</feature>
<feature type="glycosylation site" description="N-linked (GlcNAc...) asparagine" evidence="3">
    <location>
        <position position="538"/>
    </location>
</feature>
<feature type="disulfide bond" evidence="4">
    <location>
        <begin position="489"/>
        <end position="520"/>
    </location>
</feature>
<feature type="disulfide bond" evidence="4">
    <location>
        <begin position="495"/>
        <end position="516"/>
    </location>
</feature>
<feature type="disulfide bond" evidence="4">
    <location>
        <begin position="504"/>
        <end position="541"/>
    </location>
</feature>
<feature type="splice variant" id="VSP_006147" description="In isoform 2." evidence="35">
    <location>
        <begin position="1"/>
        <end position="116"/>
    </location>
</feature>
<feature type="splice variant" id="VSP_054109" description="In isoform 3." evidence="32 36">
    <location>
        <begin position="1"/>
        <end position="22"/>
    </location>
</feature>
<feature type="splice variant" id="VSP_054110" description="In isoform 4." evidence="32">
    <location>
        <begin position="6"/>
        <end position="149"/>
    </location>
</feature>
<feature type="splice variant" id="VSP_006148" description="In isoform 2." evidence="35">
    <location>
        <begin position="150"/>
        <end position="260"/>
    </location>
</feature>
<feature type="sequence variant" id="VAR_036412" description="In a breast cancer sample; somatic mutation; dbSNP:rs865987804." evidence="14">
    <original>E</original>
    <variation>K</variation>
    <location>
        <position position="77"/>
    </location>
</feature>
<feature type="sequence variant" id="VAR_053675" description="In dbSNP:rs35199625.">
    <original>V</original>
    <variation>M</variation>
    <location>
        <position position="201"/>
    </location>
</feature>
<feature type="sequence variant" id="VAR_053676" description="In dbSNP:rs12422149.">
    <original>R</original>
    <variation>Q</variation>
    <location>
        <position position="312"/>
    </location>
</feature>
<feature type="sequence variant" id="VAR_053677" description="In dbSNP:rs1621378.">
    <original>T</original>
    <variation>I</variation>
    <location>
        <position position="392"/>
    </location>
</feature>
<feature type="sequence variant" id="VAR_020294" description="In dbSNP:rs2306168." evidence="12">
    <original>S</original>
    <variation>F</variation>
    <location>
        <position position="486"/>
    </location>
</feature>
<feature type="mutagenesis site" description="No change in low- and high-affinity transport of E1S." evidence="29">
    <original>H</original>
    <variation>Q</variation>
    <location>
        <position position="46"/>
    </location>
</feature>
<feature type="mutagenesis site" description="Decreased E1S transport, no change in cell surface expression." evidence="25">
    <original>K</original>
    <variation>A</variation>
    <location>
        <position position="49"/>
    </location>
</feature>
<feature type="mutagenesis site" description="No change in E1S transport." evidence="25">
    <original>L</original>
    <variation>A</variation>
    <location>
        <position position="50"/>
    </location>
</feature>
<feature type="mutagenesis site" description="Decreased E1S transport; decreased cell surface expression; no change in Km and Vmax values. Decreased taurocholate transport." evidence="25">
    <original>F</original>
    <variation>A</variation>
    <location>
        <position position="51"/>
    </location>
</feature>
<feature type="mutagenesis site" description="Decreased E1S transport; decreased cell surface expression." evidence="25">
    <original>F</original>
    <variation>Y</variation>
    <location>
        <position position="51"/>
    </location>
</feature>
<feature type="mutagenesis site" description="Decreased E1S transport, decreased cell surface expression; no change in Km value and decreased Vmax value. Decreased taurocholate transport." evidence="25">
    <original>V</original>
    <variation>A</variation>
    <location>
        <position position="52"/>
    </location>
</feature>
<feature type="mutagenesis site" description="Decreased E1S transport." evidence="25">
    <original>V</original>
    <variation>I</variation>
    <location>
        <position position="52"/>
    </location>
</feature>
<feature type="mutagenesis site" description="No change in E1S transport." evidence="25">
    <original>L</original>
    <variation>A</variation>
    <location>
        <position position="53"/>
    </location>
</feature>
<feature type="mutagenesis site" description="No change in E1S transport." evidence="25">
    <original>C</original>
    <variation>A</variation>
    <location>
        <position position="54"/>
    </location>
</feature>
<feature type="mutagenesis site" description="Decreased E1S transport, decreased cell surface expression; no change in Km value and decreased Vmax value for E1S transport activity. Decreased taurocholate transport." evidence="25">
    <original>H</original>
    <variation>A</variation>
    <location>
        <position position="55"/>
    </location>
</feature>
<feature type="mutagenesis site" description="Decreased E1S transport; decreased cell surface expression." evidence="25">
    <original>H</original>
    <variation>K</variation>
    <location>
        <position position="55"/>
    </location>
</feature>
<feature type="mutagenesis site" description="Decreased low- and high-affinity transport of E1S." evidence="29">
    <original>H</original>
    <variation>Q</variation>
    <location>
        <position position="55"/>
    </location>
</feature>
<feature type="mutagenesis site" description="Decreased E1S transport." evidence="25">
    <original>S</original>
    <variation>A</variation>
    <location>
        <position position="56"/>
    </location>
</feature>
<feature type="mutagenesis site" description="Decreased E1S transport." evidence="25">
    <original>L</original>
    <variation>A</variation>
    <location>
        <position position="57"/>
    </location>
</feature>
<feature type="mutagenesis site" description="Decreased E1S transport, no change in cell surface expression; increased Km value and decreased Vmax value for E1S transport activity. Decreased taurocholate transport." evidence="25">
    <original>L</original>
    <variation>A</variation>
    <location>
        <position position="58"/>
    </location>
</feature>
<feature type="mutagenesis site" description="Decreased E1S transport." evidence="25">
    <original>L</original>
    <variation>I</variation>
    <location>
        <position position="58"/>
    </location>
</feature>
<feature type="mutagenesis site" description="Decreased E1S transport, no change in cell surface expression; no change in Km value and decreased Vmax value for E1S transport activity. Decreased taurocholate transport." evidence="25">
    <original>Q</original>
    <variation>A</variation>
    <location>
        <position position="59"/>
    </location>
</feature>
<feature type="mutagenesis site" description="Decreased E1S transport." evidence="25">
    <original>Q</original>
    <variation>N</variation>
    <location>
        <position position="59"/>
    </location>
</feature>
<feature type="mutagenesis site" description="No change in E1S transport." evidence="25">
    <original>L</original>
    <variation>A</variation>
    <location>
        <position position="60"/>
    </location>
</feature>
<feature type="mutagenesis site" description="Decreased E1S transport, no change in cell surface expression, increased Km value and decreased Vmax value for E1S transport activity. Decreased taurocholate transport." evidence="25">
    <original>A</original>
    <variation>V</variation>
    <location>
        <position position="61"/>
    </location>
</feature>
<feature type="mutagenesis site" description="Decreased E1S transport, no change in cell surface expression; no change in Km value and decreased Vmax value for E1S transport activity. Decreased taurocholate transport." evidence="25">
    <original>Q</original>
    <variation>A</variation>
    <location>
        <position position="62"/>
    </location>
</feature>
<feature type="mutagenesis site" description="Decreased E1S transport; no change in cell surface expression." evidence="25">
    <original>Q</original>
    <variation>N</variation>
    <location>
        <position position="62"/>
    </location>
</feature>
<feature type="mutagenesis site" description="Decreased E1S transport." evidence="25">
    <original>L</original>
    <variation>A</variation>
    <location>
        <position position="63"/>
    </location>
</feature>
<feature type="mutagenesis site" description="No change in E1S transport." evidence="25">
    <original>M</original>
    <variation>A</variation>
    <location>
        <position position="64"/>
    </location>
</feature>
<feature type="mutagenesis site" description="Decreased E1S transport, no change in cell surface expression." evidence="25">
    <original>I</original>
    <variation>A</variation>
    <location>
        <position position="65"/>
    </location>
</feature>
<feature type="mutagenesis site" description="Decreased E1S transport, no change in cell surface expression, increased Km value and decreased Vmax value for E1S transport activity. Decreased taurocholate transport." evidence="25">
    <original>S</original>
    <variation>A</variation>
    <location>
        <position position="66"/>
    </location>
</feature>
<feature type="mutagenesis site" description="Decreased E1S transport." evidence="25">
    <original>S</original>
    <variation>T</variation>
    <location>
        <position position="66"/>
    </location>
</feature>
<feature type="mutagenesis site" description="Decreased E1S transport." evidence="25">
    <original>G</original>
    <variation>A</variation>
    <location>
        <position position="67"/>
    </location>
</feature>
<feature type="mutagenesis site" description="No change in E1S transport." evidence="25">
    <original>Y</original>
    <variation>A</variation>
    <location>
        <position position="68"/>
    </location>
</feature>
<feature type="mutagenesis site" description="Decreased E1S transport, no change in cell surface expression; no change in Km value and decreased Vmax value for E1S transport activity. Decreased taurocholate transport." evidence="25">
    <original>L</original>
    <variation>A</variation>
    <location>
        <position position="69"/>
    </location>
</feature>
<feature type="mutagenesis site" description="Decreased E1S transport." evidence="25">
    <original>L</original>
    <variation>I</variation>
    <location>
        <position position="69"/>
    </location>
</feature>
<feature type="mutagenesis site" description="Decreased low-affinity transport of E1S; no change in high-affinity transport of E1S." evidence="29">
    <original>H</original>
    <variation>Q</variation>
    <location>
        <position position="113"/>
    </location>
</feature>
<feature type="mutagenesis site" description="Decreased low-affinity transport of E1S; no change in high-affinity transport of E1S." evidence="29">
    <original>H</original>
    <variation>Q</variation>
    <location>
        <position position="136"/>
    </location>
</feature>
<feature type="mutagenesis site" description="Increased low- and high-affinity transport of E1S." evidence="29">
    <original>H</original>
    <variation>Q</variation>
    <location>
        <position position="185"/>
    </location>
</feature>
<feature type="mutagenesis site" description="Decreased low- and high-affinity transport of E1S." evidence="29">
    <original>H</original>
    <variation>Q</variation>
    <location>
        <position position="219"/>
    </location>
</feature>
<feature type="mutagenesis site" description="Decreased E1S transport; decreased cell surface expression. Strong decrease in cell surface expression; when associated with A-276 and A-277." evidence="23">
    <original>W</original>
    <variation>A</variation>
    <location>
        <position position="272"/>
    </location>
</feature>
<feature type="mutagenesis site" description="No change in E1S transport; decreased cell surface expression." evidence="23">
    <original>W</original>
    <variation>F</variation>
    <location>
        <position position="272"/>
    </location>
</feature>
<feature type="mutagenesis site" description="Decreased E1S transport; decreased cell surface expression. Strong decrease in cell surface expression; when associated with A-272 and A-277." evidence="23">
    <original>W</original>
    <variation>A</variation>
    <location>
        <position position="276"/>
    </location>
</feature>
<feature type="mutagenesis site" description="Decreased E1S transport; decreased cell surface expression." evidence="23">
    <original>W</original>
    <variation>F</variation>
    <location>
        <position position="276"/>
    </location>
</feature>
<feature type="mutagenesis site" description="Decreased E1S transport; decreased cell surface expression. Strong decrease in cell surface expression; when associated with A-272 and A-276." evidence="23">
    <original>W</original>
    <variation>A</variation>
    <location>
        <position position="277"/>
    </location>
</feature>
<feature type="mutagenesis site" description="Decreased E1S transport; decreased cell surface expression." evidence="23">
    <original>W</original>
    <variation>F</variation>
    <location>
        <position position="277"/>
    </location>
</feature>
<feature type="mutagenesis site" description="No change in low- and high-affinity transport of E1S." evidence="29">
    <original>H</original>
    <variation>Q</variation>
    <location>
        <position position="370"/>
    </location>
</feature>
<feature type="mutagenesis site" description="Decreased low-affinity transport of E1S; no change in high affinity transport of E1S." evidence="29">
    <original>H</original>
    <variation>Q</variation>
    <location>
        <position position="436"/>
    </location>
</feature>
<feature type="mutagenesis site" description="Decreased high-affinity transport of E1S; no change in low-affinity transport of E1S." evidence="29">
    <original>H</original>
    <variation>Q</variation>
    <location>
        <position position="468"/>
    </location>
</feature>
<feature type="mutagenesis site" description="Increased high-affinity transport of E1S; decreased low-affinity transport of E1S." evidence="29">
    <original>H</original>
    <variation>Q</variation>
    <location>
        <position position="475"/>
    </location>
</feature>
<feature type="mutagenesis site" description="No change in low- and high-affinity transport of E1S." evidence="29">
    <original>H</original>
    <variation>Q</variation>
    <location>
        <position position="480"/>
    </location>
</feature>
<feature type="mutagenesis site" description="Decreased low-affinity transport of E1S; no change in high-affinity transport of E1S." evidence="29">
    <original>H</original>
    <variation>Q</variation>
    <location>
        <position position="517"/>
    </location>
</feature>
<feature type="mutagenesis site" description="No change in E1S transport; no change in cell surface expression." evidence="23">
    <original>W</original>
    <variation>A</variation>
    <location>
        <position position="523"/>
    </location>
</feature>
<feature type="mutagenesis site" description="Strong decrease in low-affinity and decreased in high-affinity transport of E1S; undetectable kinetic parameter for low-affinity and no change in Vmax/Km value for high-affinity transort. Increased PGE2 transport. Decreased in low- and high-affinity transport of E1S and lower Vmax/Km values; when associated with Q-618." evidence="29">
    <original>H</original>
    <variation>Q</variation>
    <location>
        <position position="579"/>
    </location>
</feature>
<feature type="mutagenesis site" description="Loss of E1S transport; small decrease in cell surface expression. Strong decrease in low-affinity transport of E1S and loss of high-affinity transport of E1S. Decreased PGE2 transport." evidence="23 29">
    <original>R</original>
    <variation>A</variation>
    <location>
        <position position="607"/>
    </location>
</feature>
<feature type="mutagenesis site" description="Decreased E1S transport; decreased cell surface expression." evidence="23">
    <original>W</original>
    <variation>A</variation>
    <location>
        <position position="611"/>
    </location>
</feature>
<feature type="mutagenesis site" description="Decreased E1S transport; decreased cell surface expression." evidence="23">
    <original>W</original>
    <variation>F</variation>
    <location>
        <position position="611"/>
    </location>
</feature>
<feature type="mutagenesis site" description="Decreased E1S transport; decreased cell surface expression." evidence="23">
    <original>W</original>
    <variation>H</variation>
    <location>
        <position position="611"/>
    </location>
</feature>
<feature type="mutagenesis site" description="Decreased E1S transport; decreased cell surface expression." evidence="23">
    <original>W</original>
    <variation>S</variation>
    <location>
        <position position="611"/>
    </location>
</feature>
<feature type="mutagenesis site" description="Decreased E1S transport; decreased cell surface expression." evidence="23">
    <original>W</original>
    <variation>Y</variation>
    <location>
        <position position="611"/>
    </location>
</feature>
<feature type="mutagenesis site" description="Strong decrease in high-affinity transport of E1S and lower Vmax/Km value; no change in low-affinity transport of E1S and higher Vmax/Km value. No change in PGE2 transport. Decreased in low- and high-affinity transport of E1S and lower Vmax/Km values; when associated with Q-579." evidence="29">
    <original>H</original>
    <variation>Q</variation>
    <location>
        <position position="618"/>
    </location>
</feature>
<feature type="mutagenesis site" description="Decreased low- and high-affinity transport of E1S." evidence="29">
    <original>H</original>
    <variation>Q</variation>
    <location>
        <position position="628"/>
    </location>
</feature>
<feature type="mutagenesis site" description="No change in E1S transport; decreased cell surface expression." evidence="23">
    <original>W</original>
    <variation>A</variation>
    <location>
        <position position="629"/>
    </location>
</feature>
<feature type="sequence conflict" description="In Ref. 4; BAF82923." evidence="37" ref="4">
    <original>N</original>
    <variation>D</variation>
    <location>
        <position position="94"/>
    </location>
</feature>
<feature type="sequence conflict" description="In Ref. 2; AAG42205." evidence="37" ref="2">
    <original>D</original>
    <variation>V</variation>
    <location>
        <position position="215"/>
    </location>
</feature>
<gene>
    <name evidence="57" type="primary">SLCO2B1</name>
    <name type="synonym">KIAA0880</name>
    <name evidence="34" type="synonym">OATP2B1</name>
    <name type="synonym">OATPB</name>
    <name evidence="31" type="synonym">SLC21A9</name>
</gene>